<reference key="1">
    <citation type="journal article" date="1996" name="Hum. Mol. Genet.">
        <title>cDNA characterization and chromosomal mapping of two human homologues of the Drosophila dishevelled polarity gene.</title>
        <authorList>
            <person name="Pizzuti A."/>
            <person name="Amati F."/>
            <person name="Calabrese G."/>
            <person name="Mari A."/>
            <person name="Colosimo A."/>
            <person name="Silani V."/>
            <person name="Giardino L."/>
            <person name="Ratti A."/>
            <person name="Penso D."/>
            <person name="Calza L."/>
            <person name="Palka G."/>
            <person name="Scarlato G."/>
            <person name="Novelli G."/>
            <person name="Dallapiccola B."/>
        </authorList>
    </citation>
    <scope>NUCLEOTIDE SEQUENCE [MRNA] (ISOFORM 1)</scope>
    <source>
        <tissue>Brain</tissue>
    </source>
</reference>
<reference key="2">
    <citation type="journal article" date="1997" name="Biochem. Biophys. Res. Commun.">
        <title>cDNA cloning of a human dishevelled DVL-3 gene, mapping to 3q27, and expression in human breast and colon carcinomas.</title>
        <authorList>
            <person name="Bui T.D."/>
            <person name="Beier D.R."/>
            <person name="Jonssen M."/>
            <person name="Smith K."/>
            <person name="Dorrington S.M."/>
            <person name="Kaklamanis L."/>
            <person name="Kearney L."/>
            <person name="Regan R."/>
            <person name="Sussman D.J."/>
            <person name="Harris A.L."/>
        </authorList>
    </citation>
    <scope>NUCLEOTIDE SEQUENCE [MRNA] (ISOFORM 1)</scope>
    <source>
        <tissue>Brain</tissue>
    </source>
</reference>
<reference key="3">
    <citation type="journal article" date="1997" name="Genomics">
        <title>Human dishevelled genes constitute a DHR-containing multigene family.</title>
        <authorList>
            <person name="Semenov M.V."/>
            <person name="Snyder M."/>
        </authorList>
    </citation>
    <scope>NUCLEOTIDE SEQUENCE [MRNA] (ISOFORM 1)</scope>
</reference>
<reference key="4">
    <citation type="journal article" date="1996" name="DNA Res.">
        <title>Prediction of the coding sequences of unidentified human genes. VI. The coding sequences of 80 new genes (KIAA0201-KIAA0280) deduced by analysis of cDNA clones from cell line KG-1 and brain.</title>
        <authorList>
            <person name="Nagase T."/>
            <person name="Seki N."/>
            <person name="Ishikawa K."/>
            <person name="Ohira M."/>
            <person name="Kawarabayasi Y."/>
            <person name="Ohara O."/>
            <person name="Tanaka A."/>
            <person name="Kotani H."/>
            <person name="Miyajima N."/>
            <person name="Nomura N."/>
        </authorList>
    </citation>
    <scope>NUCLEOTIDE SEQUENCE [LARGE SCALE MRNA] (ISOFORM 1)</scope>
    <source>
        <tissue>Bone marrow</tissue>
    </source>
</reference>
<reference key="5">
    <citation type="journal article" date="2004" name="Nat. Genet.">
        <title>Complete sequencing and characterization of 21,243 full-length human cDNAs.</title>
        <authorList>
            <person name="Ota T."/>
            <person name="Suzuki Y."/>
            <person name="Nishikawa T."/>
            <person name="Otsuki T."/>
            <person name="Sugiyama T."/>
            <person name="Irie R."/>
            <person name="Wakamatsu A."/>
            <person name="Hayashi K."/>
            <person name="Sato H."/>
            <person name="Nagai K."/>
            <person name="Kimura K."/>
            <person name="Makita H."/>
            <person name="Sekine M."/>
            <person name="Obayashi M."/>
            <person name="Nishi T."/>
            <person name="Shibahara T."/>
            <person name="Tanaka T."/>
            <person name="Ishii S."/>
            <person name="Yamamoto J."/>
            <person name="Saito K."/>
            <person name="Kawai Y."/>
            <person name="Isono Y."/>
            <person name="Nakamura Y."/>
            <person name="Nagahari K."/>
            <person name="Murakami K."/>
            <person name="Yasuda T."/>
            <person name="Iwayanagi T."/>
            <person name="Wagatsuma M."/>
            <person name="Shiratori A."/>
            <person name="Sudo H."/>
            <person name="Hosoiri T."/>
            <person name="Kaku Y."/>
            <person name="Kodaira H."/>
            <person name="Kondo H."/>
            <person name="Sugawara M."/>
            <person name="Takahashi M."/>
            <person name="Kanda K."/>
            <person name="Yokoi T."/>
            <person name="Furuya T."/>
            <person name="Kikkawa E."/>
            <person name="Omura Y."/>
            <person name="Abe K."/>
            <person name="Kamihara K."/>
            <person name="Katsuta N."/>
            <person name="Sato K."/>
            <person name="Tanikawa M."/>
            <person name="Yamazaki M."/>
            <person name="Ninomiya K."/>
            <person name="Ishibashi T."/>
            <person name="Yamashita H."/>
            <person name="Murakawa K."/>
            <person name="Fujimori K."/>
            <person name="Tanai H."/>
            <person name="Kimata M."/>
            <person name="Watanabe M."/>
            <person name="Hiraoka S."/>
            <person name="Chiba Y."/>
            <person name="Ishida S."/>
            <person name="Ono Y."/>
            <person name="Takiguchi S."/>
            <person name="Watanabe S."/>
            <person name="Yosida M."/>
            <person name="Hotuta T."/>
            <person name="Kusano J."/>
            <person name="Kanehori K."/>
            <person name="Takahashi-Fujii A."/>
            <person name="Hara H."/>
            <person name="Tanase T.-O."/>
            <person name="Nomura Y."/>
            <person name="Togiya S."/>
            <person name="Komai F."/>
            <person name="Hara R."/>
            <person name="Takeuchi K."/>
            <person name="Arita M."/>
            <person name="Imose N."/>
            <person name="Musashino K."/>
            <person name="Yuuki H."/>
            <person name="Oshima A."/>
            <person name="Sasaki N."/>
            <person name="Aotsuka S."/>
            <person name="Yoshikawa Y."/>
            <person name="Matsunawa H."/>
            <person name="Ichihara T."/>
            <person name="Shiohata N."/>
            <person name="Sano S."/>
            <person name="Moriya S."/>
            <person name="Momiyama H."/>
            <person name="Satoh N."/>
            <person name="Takami S."/>
            <person name="Terashima Y."/>
            <person name="Suzuki O."/>
            <person name="Nakagawa S."/>
            <person name="Senoh A."/>
            <person name="Mizoguchi H."/>
            <person name="Goto Y."/>
            <person name="Shimizu F."/>
            <person name="Wakebe H."/>
            <person name="Hishigaki H."/>
            <person name="Watanabe T."/>
            <person name="Sugiyama A."/>
            <person name="Takemoto M."/>
            <person name="Kawakami B."/>
            <person name="Yamazaki M."/>
            <person name="Watanabe K."/>
            <person name="Kumagai A."/>
            <person name="Itakura S."/>
            <person name="Fukuzumi Y."/>
            <person name="Fujimori Y."/>
            <person name="Komiyama M."/>
            <person name="Tashiro H."/>
            <person name="Tanigami A."/>
            <person name="Fujiwara T."/>
            <person name="Ono T."/>
            <person name="Yamada K."/>
            <person name="Fujii Y."/>
            <person name="Ozaki K."/>
            <person name="Hirao M."/>
            <person name="Ohmori Y."/>
            <person name="Kawabata A."/>
            <person name="Hikiji T."/>
            <person name="Kobatake N."/>
            <person name="Inagaki H."/>
            <person name="Ikema Y."/>
            <person name="Okamoto S."/>
            <person name="Okitani R."/>
            <person name="Kawakami T."/>
            <person name="Noguchi S."/>
            <person name="Itoh T."/>
            <person name="Shigeta K."/>
            <person name="Senba T."/>
            <person name="Matsumura K."/>
            <person name="Nakajima Y."/>
            <person name="Mizuno T."/>
            <person name="Morinaga M."/>
            <person name="Sasaki M."/>
            <person name="Togashi T."/>
            <person name="Oyama M."/>
            <person name="Hata H."/>
            <person name="Watanabe M."/>
            <person name="Komatsu T."/>
            <person name="Mizushima-Sugano J."/>
            <person name="Satoh T."/>
            <person name="Shirai Y."/>
            <person name="Takahashi Y."/>
            <person name="Nakagawa K."/>
            <person name="Okumura K."/>
            <person name="Nagase T."/>
            <person name="Nomura N."/>
            <person name="Kikuchi H."/>
            <person name="Masuho Y."/>
            <person name="Yamashita R."/>
            <person name="Nakai K."/>
            <person name="Yada T."/>
            <person name="Nakamura Y."/>
            <person name="Ohara O."/>
            <person name="Isogai T."/>
            <person name="Sugano S."/>
        </authorList>
    </citation>
    <scope>NUCLEOTIDE SEQUENCE [LARGE SCALE MRNA] (ISOFORM 2)</scope>
    <source>
        <tissue>Uterus</tissue>
    </source>
</reference>
<reference key="6">
    <citation type="journal article" date="2006" name="Nature">
        <title>The DNA sequence, annotation and analysis of human chromosome 3.</title>
        <authorList>
            <person name="Muzny D.M."/>
            <person name="Scherer S.E."/>
            <person name="Kaul R."/>
            <person name="Wang J."/>
            <person name="Yu J."/>
            <person name="Sudbrak R."/>
            <person name="Buhay C.J."/>
            <person name="Chen R."/>
            <person name="Cree A."/>
            <person name="Ding Y."/>
            <person name="Dugan-Rocha S."/>
            <person name="Gill R."/>
            <person name="Gunaratne P."/>
            <person name="Harris R.A."/>
            <person name="Hawes A.C."/>
            <person name="Hernandez J."/>
            <person name="Hodgson A.V."/>
            <person name="Hume J."/>
            <person name="Jackson A."/>
            <person name="Khan Z.M."/>
            <person name="Kovar-Smith C."/>
            <person name="Lewis L.R."/>
            <person name="Lozado R.J."/>
            <person name="Metzker M.L."/>
            <person name="Milosavljevic A."/>
            <person name="Miner G.R."/>
            <person name="Morgan M.B."/>
            <person name="Nazareth L.V."/>
            <person name="Scott G."/>
            <person name="Sodergren E."/>
            <person name="Song X.-Z."/>
            <person name="Steffen D."/>
            <person name="Wei S."/>
            <person name="Wheeler D.A."/>
            <person name="Wright M.W."/>
            <person name="Worley K.C."/>
            <person name="Yuan Y."/>
            <person name="Zhang Z."/>
            <person name="Adams C.Q."/>
            <person name="Ansari-Lari M.A."/>
            <person name="Ayele M."/>
            <person name="Brown M.J."/>
            <person name="Chen G."/>
            <person name="Chen Z."/>
            <person name="Clendenning J."/>
            <person name="Clerc-Blankenburg K.P."/>
            <person name="Chen R."/>
            <person name="Chen Z."/>
            <person name="Davis C."/>
            <person name="Delgado O."/>
            <person name="Dinh H.H."/>
            <person name="Dong W."/>
            <person name="Draper H."/>
            <person name="Ernst S."/>
            <person name="Fu G."/>
            <person name="Gonzalez-Garay M.L."/>
            <person name="Garcia D.K."/>
            <person name="Gillett W."/>
            <person name="Gu J."/>
            <person name="Hao B."/>
            <person name="Haugen E."/>
            <person name="Havlak P."/>
            <person name="He X."/>
            <person name="Hennig S."/>
            <person name="Hu S."/>
            <person name="Huang W."/>
            <person name="Jackson L.R."/>
            <person name="Jacob L.S."/>
            <person name="Kelly S.H."/>
            <person name="Kube M."/>
            <person name="Levy R."/>
            <person name="Li Z."/>
            <person name="Liu B."/>
            <person name="Liu J."/>
            <person name="Liu W."/>
            <person name="Lu J."/>
            <person name="Maheshwari M."/>
            <person name="Nguyen B.-V."/>
            <person name="Okwuonu G.O."/>
            <person name="Palmeiri A."/>
            <person name="Pasternak S."/>
            <person name="Perez L.M."/>
            <person name="Phelps K.A."/>
            <person name="Plopper F.J."/>
            <person name="Qiang B."/>
            <person name="Raymond C."/>
            <person name="Rodriguez R."/>
            <person name="Saenphimmachak C."/>
            <person name="Santibanez J."/>
            <person name="Shen H."/>
            <person name="Shen Y."/>
            <person name="Subramanian S."/>
            <person name="Tabor P.E."/>
            <person name="Verduzco D."/>
            <person name="Waldron L."/>
            <person name="Wang J."/>
            <person name="Wang J."/>
            <person name="Wang Q."/>
            <person name="Williams G.A."/>
            <person name="Wong G.K.-S."/>
            <person name="Yao Z."/>
            <person name="Zhang J."/>
            <person name="Zhang X."/>
            <person name="Zhao G."/>
            <person name="Zhou J."/>
            <person name="Zhou Y."/>
            <person name="Nelson D."/>
            <person name="Lehrach H."/>
            <person name="Reinhardt R."/>
            <person name="Naylor S.L."/>
            <person name="Yang H."/>
            <person name="Olson M."/>
            <person name="Weinstock G."/>
            <person name="Gibbs R.A."/>
        </authorList>
    </citation>
    <scope>NUCLEOTIDE SEQUENCE [LARGE SCALE GENOMIC DNA]</scope>
</reference>
<reference key="7">
    <citation type="submission" date="2005-09" db="EMBL/GenBank/DDBJ databases">
        <authorList>
            <person name="Mural R.J."/>
            <person name="Istrail S."/>
            <person name="Sutton G.G."/>
            <person name="Florea L."/>
            <person name="Halpern A.L."/>
            <person name="Mobarry C.M."/>
            <person name="Lippert R."/>
            <person name="Walenz B."/>
            <person name="Shatkay H."/>
            <person name="Dew I."/>
            <person name="Miller J.R."/>
            <person name="Flanigan M.J."/>
            <person name="Edwards N.J."/>
            <person name="Bolanos R."/>
            <person name="Fasulo D."/>
            <person name="Halldorsson B.V."/>
            <person name="Hannenhalli S."/>
            <person name="Turner R."/>
            <person name="Yooseph S."/>
            <person name="Lu F."/>
            <person name="Nusskern D.R."/>
            <person name="Shue B.C."/>
            <person name="Zheng X.H."/>
            <person name="Zhong F."/>
            <person name="Delcher A.L."/>
            <person name="Huson D.H."/>
            <person name="Kravitz S.A."/>
            <person name="Mouchard L."/>
            <person name="Reinert K."/>
            <person name="Remington K.A."/>
            <person name="Clark A.G."/>
            <person name="Waterman M.S."/>
            <person name="Eichler E.E."/>
            <person name="Adams M.D."/>
            <person name="Hunkapiller M.W."/>
            <person name="Myers E.W."/>
            <person name="Venter J.C."/>
        </authorList>
    </citation>
    <scope>NUCLEOTIDE SEQUENCE [LARGE SCALE GENOMIC DNA]</scope>
</reference>
<reference key="8">
    <citation type="journal article" date="2004" name="Genome Res.">
        <title>The status, quality, and expansion of the NIH full-length cDNA project: the Mammalian Gene Collection (MGC).</title>
        <authorList>
            <consortium name="The MGC Project Team"/>
        </authorList>
    </citation>
    <scope>NUCLEOTIDE SEQUENCE [LARGE SCALE MRNA] (ISOFORM 1)</scope>
    <scope>VARIANT LEU-433</scope>
    <source>
        <tissue>Brain</tissue>
    </source>
</reference>
<reference key="9">
    <citation type="journal article" date="2003" name="EMBO J.">
        <title>Regulation of the Wnt signaling pathway by disabled-2 (Dab2).</title>
        <authorList>
            <person name="Howe P.H."/>
        </authorList>
    </citation>
    <scope>INTERACTION WITH DAB2</scope>
</reference>
<reference key="10">
    <citation type="journal article" date="2005" name="Proc. Natl. Acad. Sci. U.S.A.">
        <title>Identification of the Wnt signaling activator leucine-rich repeat in Flightless interaction protein 2 by a genome-wide functional analysis.</title>
        <authorList>
            <person name="Liu J."/>
            <person name="Bang A.G."/>
            <person name="Kintner C."/>
            <person name="Orth A.P."/>
            <person name="Chanda S.K."/>
            <person name="Ding S."/>
            <person name="Schultz P.G."/>
        </authorList>
    </citation>
    <scope>INTERACTION WITH LRRFIP2</scope>
</reference>
<reference key="11">
    <citation type="journal article" date="2008" name="Proc. Natl. Acad. Sci. U.S.A.">
        <title>A quantitative atlas of mitotic phosphorylation.</title>
        <authorList>
            <person name="Dephoure N."/>
            <person name="Zhou C."/>
            <person name="Villen J."/>
            <person name="Beausoleil S.A."/>
            <person name="Bakalarski C.E."/>
            <person name="Elledge S.J."/>
            <person name="Gygi S.P."/>
        </authorList>
    </citation>
    <scope>PHOSPHORYLATION [LARGE SCALE ANALYSIS] AT SER-192</scope>
    <scope>IDENTIFICATION BY MASS SPECTROMETRY [LARGE SCALE ANALYSIS]</scope>
    <source>
        <tissue>Cervix carcinoma</tissue>
    </source>
</reference>
<reference key="12">
    <citation type="journal article" date="2010" name="Mol. Cell">
        <title>Loss of the tumor suppressor CYLD enhances Wnt/beta-catenin signaling through K63-linked ubiquitination of Dvl.</title>
        <authorList>
            <person name="Tauriello D.V."/>
            <person name="Haegebarth A."/>
            <person name="Kuper I."/>
            <person name="Edelmann M.J."/>
            <person name="Henraat M."/>
            <person name="Canninga-van Dijk M.R."/>
            <person name="Kessler B.M."/>
            <person name="Clevers H."/>
            <person name="Maurice M.M."/>
        </authorList>
    </citation>
    <scope>UBIQUITINATION</scope>
    <scope>DEUBIQUITINATION</scope>
    <scope>INTERACTION WITH CYLD</scope>
</reference>
<reference key="13">
    <citation type="journal article" date="2011" name="J. Cell Biol.">
        <title>Casein kinase 1 delta functions at the centrosome to mediate Wnt-3a-dependent neurite outgrowth.</title>
        <authorList>
            <person name="Greer Y.E."/>
            <person name="Rubin J.S."/>
        </authorList>
    </citation>
    <scope>PHOSPHORYLATION BY CSNK1D/CK1</scope>
</reference>
<reference key="14">
    <citation type="journal article" date="2011" name="Sci. Signal.">
        <title>System-wide temporal characterization of the proteome and phosphoproteome of human embryonic stem cell differentiation.</title>
        <authorList>
            <person name="Rigbolt K.T."/>
            <person name="Prokhorova T.A."/>
            <person name="Akimov V."/>
            <person name="Henningsen J."/>
            <person name="Johansen P.T."/>
            <person name="Kratchmarova I."/>
            <person name="Kassem M."/>
            <person name="Mann M."/>
            <person name="Olsen J.V."/>
            <person name="Blagoev B."/>
        </authorList>
    </citation>
    <scope>PHOSPHORYLATION [LARGE SCALE ANALYSIS] AT SER-48</scope>
    <scope>IDENTIFICATION BY MASS SPECTROMETRY [LARGE SCALE ANALYSIS]</scope>
</reference>
<reference key="15">
    <citation type="journal article" date="2012" name="Cell">
        <title>Exome capture reveals ZNF423 and CEP164 mutations, linking renal ciliopathies to DNA damage response signaling.</title>
        <authorList>
            <person name="Chaki M."/>
            <person name="Airik R."/>
            <person name="Ghosh A.K."/>
            <person name="Giles R.H."/>
            <person name="Chen R."/>
            <person name="Slaats G.G."/>
            <person name="Wang H."/>
            <person name="Hurd T.W."/>
            <person name="Zhou W."/>
            <person name="Cluckey A."/>
            <person name="Gee H.Y."/>
            <person name="Ramaswami G."/>
            <person name="Hong C.J."/>
            <person name="Hamilton B.A."/>
            <person name="Cervenka I."/>
            <person name="Ganji R.S."/>
            <person name="Bryja V."/>
            <person name="Arts H.H."/>
            <person name="van Reeuwijk J."/>
            <person name="Oud M.M."/>
            <person name="Letteboer S.J."/>
            <person name="Roepman R."/>
            <person name="Husson H."/>
            <person name="Ibraghimov-Beskrovnaya O."/>
            <person name="Yasunaga T."/>
            <person name="Walz G."/>
            <person name="Eley L."/>
            <person name="Sayer J.A."/>
            <person name="Schermer B."/>
            <person name="Liebau M.C."/>
            <person name="Benzing T."/>
            <person name="Le Corre S."/>
            <person name="Drummond I."/>
            <person name="Janssen S."/>
            <person name="Allen S.J."/>
            <person name="Natarajan S."/>
            <person name="O'Toole J.F."/>
            <person name="Attanasio M."/>
            <person name="Saunier S."/>
            <person name="Antignac C."/>
            <person name="Koenekoop R.K."/>
            <person name="Ren H."/>
            <person name="Lopez I."/>
            <person name="Nayir A."/>
            <person name="Stoetzel C."/>
            <person name="Dollfus H."/>
            <person name="Massoudi R."/>
            <person name="Gleeson J.G."/>
            <person name="Andreoli S.P."/>
            <person name="Doherty D.G."/>
            <person name="Lindstrad A."/>
            <person name="Golzio C."/>
            <person name="Katsanis N."/>
            <person name="Pape L."/>
            <person name="Abboud E.B."/>
            <person name="Al-Rajhi A.A."/>
            <person name="Lewis R.A."/>
            <person name="Omran H."/>
            <person name="Lee E.Y."/>
            <person name="Wang S."/>
            <person name="Sekiguchi J.M."/>
            <person name="Saunders R."/>
            <person name="Johnson C.A."/>
            <person name="Garner E."/>
            <person name="Vanselow K."/>
            <person name="Andersen J.S."/>
            <person name="Shlomai J."/>
            <person name="Nurnberg G."/>
            <person name="Nurnberg P."/>
            <person name="Levy S."/>
            <person name="Smogorzewska A."/>
            <person name="Otto E.A."/>
            <person name="Hildebrandt F."/>
        </authorList>
    </citation>
    <scope>INTERACTION WITH CEP164</scope>
</reference>
<reference key="16">
    <citation type="journal article" date="2012" name="J. Proteome Res.">
        <title>Delicate analysis of post-translational modifications on Dishevelled 3.</title>
        <authorList>
            <person name="Wu C."/>
            <person name="Wei W."/>
            <person name="Li C."/>
            <person name="Li Q."/>
            <person name="Sheng Q."/>
            <person name="Zeng R."/>
        </authorList>
    </citation>
    <scope>PHOSPHORYLATION AT SER-192; THR-346 AND SER-700</scope>
    <scope>METHYLATION AT ARG-27; ARG-212; ARG-342 AND ARG-698</scope>
</reference>
<reference key="17">
    <citation type="journal article" date="2012" name="Sci. Rep.">
        <title>Dishevelled3 is a novel arginine methyl transferase substrate.</title>
        <authorList>
            <person name="Bikkavilli R.K."/>
            <person name="Avasarala S."/>
            <person name="Vanscoyk M."/>
            <person name="Sechler M."/>
            <person name="Kelley N."/>
            <person name="Malbon C.C."/>
            <person name="Winn R.A."/>
        </authorList>
    </citation>
    <scope>METHYLATION AT ARG-271; ARG-342 AND ARG-614</scope>
    <scope>MUTAGENESIS OF ARG-271; ARG-342 AND ARG-614</scope>
</reference>
<reference key="18">
    <citation type="journal article" date="2013" name="J. Proteome Res.">
        <title>Toward a comprehensive characterization of a human cancer cell phosphoproteome.</title>
        <authorList>
            <person name="Zhou H."/>
            <person name="Di Palma S."/>
            <person name="Preisinger C."/>
            <person name="Peng M."/>
            <person name="Polat A.N."/>
            <person name="Heck A.J."/>
            <person name="Mohammed S."/>
        </authorList>
    </citation>
    <scope>PHOSPHORYLATION [LARGE SCALE ANALYSIS] AT SER-48 AND SER-697</scope>
    <scope>IDENTIFICATION BY MASS SPECTROMETRY [LARGE SCALE ANALYSIS]</scope>
    <source>
        <tissue>Erythroleukemia</tissue>
    </source>
</reference>
<reference key="19">
    <citation type="journal article" date="2014" name="J. Proteomics">
        <title>An enzyme assisted RP-RPLC approach for in-depth analysis of human liver phosphoproteome.</title>
        <authorList>
            <person name="Bian Y."/>
            <person name="Song C."/>
            <person name="Cheng K."/>
            <person name="Dong M."/>
            <person name="Wang F."/>
            <person name="Huang J."/>
            <person name="Sun D."/>
            <person name="Wang L."/>
            <person name="Ye M."/>
            <person name="Zou H."/>
        </authorList>
    </citation>
    <scope>PHOSPHORYLATION [LARGE SCALE ANALYSIS] AT SER-125 AND SER-192</scope>
    <scope>IDENTIFICATION BY MASS SPECTROMETRY [LARGE SCALE ANALYSIS]</scope>
    <source>
        <tissue>Liver</tissue>
    </source>
</reference>
<reference key="20">
    <citation type="journal article" date="2015" name="Am. J. Hum. Genet.">
        <title>DCDC2 mutations cause a renal-hepatic ciliopathy by disrupting Wnt signaling.</title>
        <authorList>
            <person name="Schueler M."/>
            <person name="Braun D.A."/>
            <person name="Chandrasekar G."/>
            <person name="Gee H.Y."/>
            <person name="Klasson T.D."/>
            <person name="Halbritter J."/>
            <person name="Bieder A."/>
            <person name="Porath J.D."/>
            <person name="Airik R."/>
            <person name="Zhou W."/>
            <person name="LoTurco J.J."/>
            <person name="Che A."/>
            <person name="Otto E.A."/>
            <person name="Boeckenhauer D."/>
            <person name="Sebire N.J."/>
            <person name="Honzik T."/>
            <person name="Harris P.C."/>
            <person name="Koon S.J."/>
            <person name="Gunay-Aygun M."/>
            <person name="Saunier S."/>
            <person name="Zerres K."/>
            <person name="Bruechle N.O."/>
            <person name="Drenth J.P."/>
            <person name="Pelletier L."/>
            <person name="Tapia-Paez I."/>
            <person name="Lifton R.P."/>
            <person name="Giles R.H."/>
            <person name="Kere J."/>
            <person name="Hildebrandt F."/>
        </authorList>
    </citation>
    <scope>INTERACTION WITH DCDC2</scope>
</reference>
<reference key="21">
    <citation type="journal article" date="2015" name="Dev. Cell">
        <title>FOXKs promote Wnt/beta-catenin signaling by translocating DVL into the nucleus.</title>
        <authorList>
            <person name="Wang W."/>
            <person name="Li X."/>
            <person name="Lee M."/>
            <person name="Jun S."/>
            <person name="Aziz K.E."/>
            <person name="Feng L."/>
            <person name="Tran M.K."/>
            <person name="Li N."/>
            <person name="McCrea P.D."/>
            <person name="Park J.I."/>
            <person name="Chen J."/>
        </authorList>
    </citation>
    <scope>INTERACTION WITH FOXK1 AND FOXK2</scope>
</reference>
<reference key="22">
    <citation type="journal article" date="2016" name="Am. J. Hum. Genet.">
        <title>DVL3 alleles resulting in a -1 frameshift of the last exon mediate autosomal-dominant Robinow syndrome.</title>
        <authorList>
            <consortium name="Baylor-Hopkins Center for Mendelian Genomics"/>
            <person name="White J.J."/>
            <person name="Mazzeu J.F."/>
            <person name="Hoischen A."/>
            <person name="Bayram Y."/>
            <person name="Withers M."/>
            <person name="Gezdirici A."/>
            <person name="Kimonis V."/>
            <person name="Steehouwer M."/>
            <person name="Jhangiani S.N."/>
            <person name="Muzny D.M."/>
            <person name="Gibbs R.A."/>
            <person name="van Bon B.W."/>
            <person name="Sutton V.R."/>
            <person name="Lupski J.R."/>
            <person name="Brunner H.G."/>
            <person name="Carvalho C.M."/>
        </authorList>
    </citation>
    <scope>INVOLVEMENT IN DRS3</scope>
</reference>
<reference key="23">
    <citation type="journal article" date="2006" name="Science">
        <title>The consensus coding sequences of human breast and colorectal cancers.</title>
        <authorList>
            <person name="Sjoeblom T."/>
            <person name="Jones S."/>
            <person name="Wood L.D."/>
            <person name="Parsons D.W."/>
            <person name="Lin J."/>
            <person name="Barber T.D."/>
            <person name="Mandelker D."/>
            <person name="Leary R.J."/>
            <person name="Ptak J."/>
            <person name="Silliman N."/>
            <person name="Szabo S."/>
            <person name="Buckhaults P."/>
            <person name="Farrell C."/>
            <person name="Meeh P."/>
            <person name="Markowitz S.D."/>
            <person name="Willis J."/>
            <person name="Dawson D."/>
            <person name="Willson J.K.V."/>
            <person name="Gazdar A.F."/>
            <person name="Hartigan J."/>
            <person name="Wu L."/>
            <person name="Liu C."/>
            <person name="Parmigiani G."/>
            <person name="Park B.H."/>
            <person name="Bachman K.E."/>
            <person name="Papadopoulos N."/>
            <person name="Vogelstein B."/>
            <person name="Kinzler K.W."/>
            <person name="Velculescu V.E."/>
        </authorList>
    </citation>
    <scope>VARIANT [LARGE SCALE ANALYSIS] THR-216</scope>
</reference>
<protein>
    <recommendedName>
        <fullName>Segment polarity protein dishevelled homolog DVL-3</fullName>
        <shortName>Dishevelled-3</shortName>
    </recommendedName>
    <alternativeName>
        <fullName>DSH homolog 3</fullName>
    </alternativeName>
</protein>
<dbReference type="EMBL" id="U49262">
    <property type="protein sequence ID" value="AAB47447.1"/>
    <property type="molecule type" value="mRNA"/>
</dbReference>
<dbReference type="EMBL" id="U75651">
    <property type="protein sequence ID" value="AAB84228.1"/>
    <property type="molecule type" value="mRNA"/>
</dbReference>
<dbReference type="EMBL" id="AF006013">
    <property type="protein sequence ID" value="AAB65244.1"/>
    <property type="molecule type" value="mRNA"/>
</dbReference>
<dbReference type="EMBL" id="D86963">
    <property type="protein sequence ID" value="BAA13199.2"/>
    <property type="status" value="ALT_INIT"/>
    <property type="molecule type" value="mRNA"/>
</dbReference>
<dbReference type="EMBL" id="AK304686">
    <property type="protein sequence ID" value="BAG65457.1"/>
    <property type="molecule type" value="mRNA"/>
</dbReference>
<dbReference type="EMBL" id="AC131235">
    <property type="status" value="NOT_ANNOTATED_CDS"/>
    <property type="molecule type" value="Genomic_DNA"/>
</dbReference>
<dbReference type="EMBL" id="CH471052">
    <property type="protein sequence ID" value="EAW78295.1"/>
    <property type="molecule type" value="Genomic_DNA"/>
</dbReference>
<dbReference type="EMBL" id="CH471052">
    <property type="protein sequence ID" value="EAW78296.1"/>
    <property type="molecule type" value="Genomic_DNA"/>
</dbReference>
<dbReference type="EMBL" id="BC032459">
    <property type="protein sequence ID" value="AAH32459.1"/>
    <property type="molecule type" value="mRNA"/>
</dbReference>
<dbReference type="CCDS" id="CCDS3253.1">
    <molecule id="Q92997-1"/>
</dbReference>
<dbReference type="PIR" id="JC5763">
    <property type="entry name" value="JC5763"/>
</dbReference>
<dbReference type="RefSeq" id="NP_004414.3">
    <molecule id="Q92997-1"/>
    <property type="nucleotide sequence ID" value="NM_004423.3"/>
</dbReference>
<dbReference type="PDB" id="6V7O">
    <property type="method" value="X-ray"/>
    <property type="resolution" value="2.90 A"/>
    <property type="chains" value="C/D=679-688"/>
</dbReference>
<dbReference type="PDB" id="6ZBQ">
    <property type="method" value="X-ray"/>
    <property type="resolution" value="1.43 A"/>
    <property type="chains" value="A/B=243-335"/>
</dbReference>
<dbReference type="PDB" id="6ZBZ">
    <property type="method" value="X-ray"/>
    <property type="resolution" value="1.60 A"/>
    <property type="chains" value="A/B/C/D=243-335"/>
</dbReference>
<dbReference type="PDB" id="6ZC3">
    <property type="method" value="X-ray"/>
    <property type="resolution" value="1.67 A"/>
    <property type="chains" value="A/B=243-335"/>
</dbReference>
<dbReference type="PDB" id="6ZC4">
    <property type="method" value="X-ray"/>
    <property type="resolution" value="1.85 A"/>
    <property type="chains" value="A/B=243-335"/>
</dbReference>
<dbReference type="PDB" id="6ZC6">
    <property type="method" value="X-ray"/>
    <property type="resolution" value="1.58 A"/>
    <property type="chains" value="A=243-335"/>
</dbReference>
<dbReference type="PDB" id="6ZC7">
    <property type="method" value="X-ray"/>
    <property type="resolution" value="1.48 A"/>
    <property type="chains" value="A/B=243-335"/>
</dbReference>
<dbReference type="PDB" id="6ZC8">
    <property type="method" value="X-ray"/>
    <property type="resolution" value="2.76 A"/>
    <property type="chains" value="A/B=243-335"/>
</dbReference>
<dbReference type="PDB" id="8S6A">
    <property type="method" value="X-ray"/>
    <property type="resolution" value="1.36 A"/>
    <property type="chains" value="A/B=245-351"/>
</dbReference>
<dbReference type="PDBsum" id="6V7O"/>
<dbReference type="PDBsum" id="6ZBQ"/>
<dbReference type="PDBsum" id="6ZBZ"/>
<dbReference type="PDBsum" id="6ZC3"/>
<dbReference type="PDBsum" id="6ZC4"/>
<dbReference type="PDBsum" id="6ZC6"/>
<dbReference type="PDBsum" id="6ZC7"/>
<dbReference type="PDBsum" id="6ZC8"/>
<dbReference type="PDBsum" id="8S6A"/>
<dbReference type="SMR" id="Q92997"/>
<dbReference type="BioGRID" id="108190">
    <property type="interactions" value="274"/>
</dbReference>
<dbReference type="DIP" id="DIP-34509N"/>
<dbReference type="FunCoup" id="Q92997">
    <property type="interactions" value="2541"/>
</dbReference>
<dbReference type="IntAct" id="Q92997">
    <property type="interactions" value="264"/>
</dbReference>
<dbReference type="MINT" id="Q92997"/>
<dbReference type="STRING" id="9606.ENSP00000316054"/>
<dbReference type="BindingDB" id="Q92997"/>
<dbReference type="ChEMBL" id="CHEMBL6028"/>
<dbReference type="MoonDB" id="Q92997">
    <property type="type" value="Predicted"/>
</dbReference>
<dbReference type="GlyCosmos" id="Q92997">
    <property type="glycosylation" value="2 sites, 1 glycan"/>
</dbReference>
<dbReference type="GlyGen" id="Q92997">
    <property type="glycosylation" value="6 sites, 1 O-linked glycan (6 sites)"/>
</dbReference>
<dbReference type="iPTMnet" id="Q92997"/>
<dbReference type="PhosphoSitePlus" id="Q92997"/>
<dbReference type="BioMuta" id="DVL3"/>
<dbReference type="DMDM" id="6919875"/>
<dbReference type="jPOST" id="Q92997"/>
<dbReference type="MassIVE" id="Q92997"/>
<dbReference type="PaxDb" id="9606-ENSP00000316054"/>
<dbReference type="PeptideAtlas" id="Q92997"/>
<dbReference type="ProteomicsDB" id="5895"/>
<dbReference type="ProteomicsDB" id="75666">
    <molecule id="Q92997-1"/>
</dbReference>
<dbReference type="Pumba" id="Q92997"/>
<dbReference type="Antibodypedia" id="33790">
    <property type="antibodies" value="320 antibodies from 36 providers"/>
</dbReference>
<dbReference type="DNASU" id="1857"/>
<dbReference type="Ensembl" id="ENST00000313143.9">
    <molecule id="Q92997-1"/>
    <property type="protein sequence ID" value="ENSP00000316054.3"/>
    <property type="gene ID" value="ENSG00000161202.20"/>
</dbReference>
<dbReference type="Ensembl" id="ENST00000431765.6">
    <molecule id="Q92997-2"/>
    <property type="protein sequence ID" value="ENSP00000405885.1"/>
    <property type="gene ID" value="ENSG00000161202.20"/>
</dbReference>
<dbReference type="GeneID" id="1857"/>
<dbReference type="KEGG" id="hsa:1857"/>
<dbReference type="MANE-Select" id="ENST00000313143.9">
    <property type="protein sequence ID" value="ENSP00000316054.3"/>
    <property type="RefSeq nucleotide sequence ID" value="NM_004423.4"/>
    <property type="RefSeq protein sequence ID" value="NP_004414.3"/>
</dbReference>
<dbReference type="UCSC" id="uc003fms.4">
    <molecule id="Q92997-1"/>
    <property type="organism name" value="human"/>
</dbReference>
<dbReference type="AGR" id="HGNC:3087"/>
<dbReference type="CTD" id="1857"/>
<dbReference type="DisGeNET" id="1857"/>
<dbReference type="GeneCards" id="DVL3"/>
<dbReference type="GeneReviews" id="DVL3"/>
<dbReference type="HGNC" id="HGNC:3087">
    <property type="gene designation" value="DVL3"/>
</dbReference>
<dbReference type="HPA" id="ENSG00000161202">
    <property type="expression patterns" value="Low tissue specificity"/>
</dbReference>
<dbReference type="MalaCards" id="DVL3"/>
<dbReference type="MIM" id="601368">
    <property type="type" value="gene"/>
</dbReference>
<dbReference type="MIM" id="616894">
    <property type="type" value="phenotype"/>
</dbReference>
<dbReference type="neXtProt" id="NX_Q92997"/>
<dbReference type="OpenTargets" id="ENSG00000161202"/>
<dbReference type="Orphanet" id="3107">
    <property type="disease" value="Autosomal dominant Robinow syndrome"/>
</dbReference>
<dbReference type="PharmGKB" id="PA27543"/>
<dbReference type="VEuPathDB" id="HostDB:ENSG00000161202"/>
<dbReference type="eggNOG" id="KOG3571">
    <property type="taxonomic scope" value="Eukaryota"/>
</dbReference>
<dbReference type="GeneTree" id="ENSGT00950000182903"/>
<dbReference type="HOGENOM" id="CLU_012601_1_0_1"/>
<dbReference type="InParanoid" id="Q92997"/>
<dbReference type="OMA" id="RFEEFHL"/>
<dbReference type="OrthoDB" id="10031689at2759"/>
<dbReference type="PAN-GO" id="Q92997">
    <property type="GO annotations" value="4 GO annotations based on evolutionary models"/>
</dbReference>
<dbReference type="PhylomeDB" id="Q92997"/>
<dbReference type="TreeFam" id="TF318198"/>
<dbReference type="PathwayCommons" id="Q92997"/>
<dbReference type="Reactome" id="R-HSA-201681">
    <property type="pathway name" value="TCF dependent signaling in response to WNT"/>
</dbReference>
<dbReference type="Reactome" id="R-HSA-201688">
    <property type="pathway name" value="WNT mediated activation of DVL"/>
</dbReference>
<dbReference type="Reactome" id="R-HSA-4086400">
    <property type="pathway name" value="PCP/CE pathway"/>
</dbReference>
<dbReference type="Reactome" id="R-HSA-4641258">
    <property type="pathway name" value="Degradation of DVL"/>
</dbReference>
<dbReference type="Reactome" id="R-HSA-4641262">
    <property type="pathway name" value="Disassembly of the destruction complex and recruitment of AXIN to the membrane"/>
</dbReference>
<dbReference type="Reactome" id="R-HSA-5368598">
    <property type="pathway name" value="Negative regulation of TCF-dependent signaling by DVL-interacting proteins"/>
</dbReference>
<dbReference type="Reactome" id="R-HSA-5663220">
    <property type="pathway name" value="RHO GTPases Activate Formins"/>
</dbReference>
<dbReference type="Reactome" id="R-HSA-9673324">
    <property type="pathway name" value="WNT5:FZD7-mediated leishmania damping"/>
</dbReference>
<dbReference type="SignaLink" id="Q92997"/>
<dbReference type="SIGNOR" id="Q92997"/>
<dbReference type="BioGRID-ORCS" id="1857">
    <property type="hits" value="13 hits in 1153 CRISPR screens"/>
</dbReference>
<dbReference type="CD-CODE" id="232F8A39">
    <property type="entry name" value="P-body"/>
</dbReference>
<dbReference type="CD-CODE" id="DEE660B4">
    <property type="entry name" value="Stress granule"/>
</dbReference>
<dbReference type="ChiTaRS" id="DVL3">
    <property type="organism name" value="human"/>
</dbReference>
<dbReference type="GeneWiki" id="DVL3"/>
<dbReference type="GenomeRNAi" id="1857"/>
<dbReference type="Pharos" id="Q92997">
    <property type="development level" value="Tbio"/>
</dbReference>
<dbReference type="PRO" id="PR:Q92997"/>
<dbReference type="Proteomes" id="UP000005640">
    <property type="component" value="Chromosome 3"/>
</dbReference>
<dbReference type="RNAct" id="Q92997">
    <property type="molecule type" value="protein"/>
</dbReference>
<dbReference type="Bgee" id="ENSG00000161202">
    <property type="expression patterns" value="Expressed in stromal cell of endometrium and 197 other cell types or tissues"/>
</dbReference>
<dbReference type="ExpressionAtlas" id="Q92997">
    <property type="expression patterns" value="baseline and differential"/>
</dbReference>
<dbReference type="GO" id="GO:0000785">
    <property type="term" value="C:chromatin"/>
    <property type="evidence" value="ECO:0000314"/>
    <property type="project" value="ARUK-UCL"/>
</dbReference>
<dbReference type="GO" id="GO:0005829">
    <property type="term" value="C:cytosol"/>
    <property type="evidence" value="ECO:0000314"/>
    <property type="project" value="ParkinsonsUK-UCL"/>
</dbReference>
<dbReference type="GO" id="GO:0008013">
    <property type="term" value="F:beta-catenin binding"/>
    <property type="evidence" value="ECO:0000314"/>
    <property type="project" value="BHF-UCL"/>
</dbReference>
<dbReference type="GO" id="GO:0005109">
    <property type="term" value="F:frizzled binding"/>
    <property type="evidence" value="ECO:0000353"/>
    <property type="project" value="UniProtKB"/>
</dbReference>
<dbReference type="GO" id="GO:0002020">
    <property type="term" value="F:protease binding"/>
    <property type="evidence" value="ECO:0000353"/>
    <property type="project" value="UniProtKB"/>
</dbReference>
<dbReference type="GO" id="GO:0005102">
    <property type="term" value="F:signaling receptor binding"/>
    <property type="evidence" value="ECO:0000353"/>
    <property type="project" value="BHF-UCL"/>
</dbReference>
<dbReference type="GO" id="GO:0031267">
    <property type="term" value="F:small GTPase binding"/>
    <property type="evidence" value="ECO:0000353"/>
    <property type="project" value="ParkinsonsUK-UCL"/>
</dbReference>
<dbReference type="GO" id="GO:0060070">
    <property type="term" value="P:canonical Wnt signaling pathway"/>
    <property type="evidence" value="ECO:0000314"/>
    <property type="project" value="BHF-UCL"/>
</dbReference>
<dbReference type="GO" id="GO:0035556">
    <property type="term" value="P:intracellular signal transduction"/>
    <property type="evidence" value="ECO:0007669"/>
    <property type="project" value="InterPro"/>
</dbReference>
<dbReference type="GO" id="GO:0035567">
    <property type="term" value="P:non-canonical Wnt signaling pathway"/>
    <property type="evidence" value="ECO:0000315"/>
    <property type="project" value="BHF-UCL"/>
</dbReference>
<dbReference type="GO" id="GO:0045893">
    <property type="term" value="P:positive regulation of DNA-templated transcription"/>
    <property type="evidence" value="ECO:0000314"/>
    <property type="project" value="BHF-UCL"/>
</dbReference>
<dbReference type="GO" id="GO:0043547">
    <property type="term" value="P:positive regulation of GTPase activity"/>
    <property type="evidence" value="ECO:0000314"/>
    <property type="project" value="ParkinsonsUK-UCL"/>
</dbReference>
<dbReference type="GO" id="GO:0046330">
    <property type="term" value="P:positive regulation of JNK cascade"/>
    <property type="evidence" value="ECO:0000315"/>
    <property type="project" value="BHF-UCL"/>
</dbReference>
<dbReference type="GO" id="GO:0150012">
    <property type="term" value="P:positive regulation of neuron projection arborization"/>
    <property type="evidence" value="ECO:0000250"/>
    <property type="project" value="ARUK-UCL"/>
</dbReference>
<dbReference type="GO" id="GO:0045944">
    <property type="term" value="P:positive regulation of transcription by RNA polymerase II"/>
    <property type="evidence" value="ECO:0000314"/>
    <property type="project" value="BHF-UCL"/>
</dbReference>
<dbReference type="GO" id="GO:0050821">
    <property type="term" value="P:protein stabilization"/>
    <property type="evidence" value="ECO:0000316"/>
    <property type="project" value="ParkinsonsUK-UCL"/>
</dbReference>
<dbReference type="GO" id="GO:0032956">
    <property type="term" value="P:regulation of actin cytoskeleton organization"/>
    <property type="evidence" value="ECO:0000304"/>
    <property type="project" value="BHF-UCL"/>
</dbReference>
<dbReference type="GO" id="GO:0032880">
    <property type="term" value="P:regulation of protein localization"/>
    <property type="evidence" value="ECO:0000314"/>
    <property type="project" value="ParkinsonsUK-UCL"/>
</dbReference>
<dbReference type="GO" id="GO:0009410">
    <property type="term" value="P:response to xenobiotic stimulus"/>
    <property type="evidence" value="ECO:0007669"/>
    <property type="project" value="Ensembl"/>
</dbReference>
<dbReference type="GO" id="GO:0060071">
    <property type="term" value="P:Wnt signaling pathway, planar cell polarity pathway"/>
    <property type="evidence" value="ECO:0000314"/>
    <property type="project" value="BHF-UCL"/>
</dbReference>
<dbReference type="CDD" id="cd04438">
    <property type="entry name" value="DEP_dishevelled"/>
    <property type="match status" value="1"/>
</dbReference>
<dbReference type="CDD" id="cd06717">
    <property type="entry name" value="PDZ_Dishevelled-like"/>
    <property type="match status" value="1"/>
</dbReference>
<dbReference type="FunFam" id="2.40.240.130:FF:000001">
    <property type="entry name" value="Segment polarity protein dishevelled homolog DVL-1"/>
    <property type="match status" value="1"/>
</dbReference>
<dbReference type="FunFam" id="2.30.42.10:FF:000014">
    <property type="entry name" value="Segment polarity protein dishevelled homolog DVL-3"/>
    <property type="match status" value="1"/>
</dbReference>
<dbReference type="FunFam" id="1.10.10.10:FF:000040">
    <property type="entry name" value="segment polarity protein dishevelled homolog DVL-3"/>
    <property type="match status" value="1"/>
</dbReference>
<dbReference type="Gene3D" id="2.30.42.10">
    <property type="match status" value="1"/>
</dbReference>
<dbReference type="Gene3D" id="2.40.240.130">
    <property type="match status" value="1"/>
</dbReference>
<dbReference type="Gene3D" id="1.10.10.10">
    <property type="entry name" value="Winged helix-like DNA-binding domain superfamily/Winged helix DNA-binding domain"/>
    <property type="match status" value="1"/>
</dbReference>
<dbReference type="InterPro" id="IPR000591">
    <property type="entry name" value="DEP_dom"/>
</dbReference>
<dbReference type="InterPro" id="IPR024580">
    <property type="entry name" value="Dishevelled_C-dom"/>
</dbReference>
<dbReference type="InterPro" id="IPR008339">
    <property type="entry name" value="Dishevelled_fam"/>
</dbReference>
<dbReference type="InterPro" id="IPR003351">
    <property type="entry name" value="Dishevelled_protein_dom"/>
</dbReference>
<dbReference type="InterPro" id="IPR001158">
    <property type="entry name" value="DIX"/>
</dbReference>
<dbReference type="InterPro" id="IPR038207">
    <property type="entry name" value="DIX_dom_sf"/>
</dbReference>
<dbReference type="InterPro" id="IPR015506">
    <property type="entry name" value="Dsh/Dvl-rel"/>
</dbReference>
<dbReference type="InterPro" id="IPR008342">
    <property type="entry name" value="DVL3"/>
</dbReference>
<dbReference type="InterPro" id="IPR001478">
    <property type="entry name" value="PDZ"/>
</dbReference>
<dbReference type="InterPro" id="IPR036034">
    <property type="entry name" value="PDZ_sf"/>
</dbReference>
<dbReference type="InterPro" id="IPR029071">
    <property type="entry name" value="Ubiquitin-like_domsf"/>
</dbReference>
<dbReference type="InterPro" id="IPR036388">
    <property type="entry name" value="WH-like_DNA-bd_sf"/>
</dbReference>
<dbReference type="InterPro" id="IPR036390">
    <property type="entry name" value="WH_DNA-bd_sf"/>
</dbReference>
<dbReference type="PANTHER" id="PTHR10878">
    <property type="entry name" value="SEGMENT POLARITY PROTEIN DISHEVELLED"/>
    <property type="match status" value="1"/>
</dbReference>
<dbReference type="PANTHER" id="PTHR10878:SF6">
    <property type="entry name" value="SEGMENT POLARITY PROTEIN DISHEVELLED HOMOLOG DVL-3"/>
    <property type="match status" value="1"/>
</dbReference>
<dbReference type="Pfam" id="PF00610">
    <property type="entry name" value="DEP"/>
    <property type="match status" value="1"/>
</dbReference>
<dbReference type="Pfam" id="PF02377">
    <property type="entry name" value="Dishevelled"/>
    <property type="match status" value="1"/>
</dbReference>
<dbReference type="Pfam" id="PF00778">
    <property type="entry name" value="DIX"/>
    <property type="match status" value="1"/>
</dbReference>
<dbReference type="Pfam" id="PF12316">
    <property type="entry name" value="Dsh_C"/>
    <property type="match status" value="1"/>
</dbReference>
<dbReference type="Pfam" id="PF00595">
    <property type="entry name" value="PDZ"/>
    <property type="match status" value="1"/>
</dbReference>
<dbReference type="PRINTS" id="PR01760">
    <property type="entry name" value="DISHEVELLED"/>
</dbReference>
<dbReference type="PRINTS" id="PR01763">
    <property type="entry name" value="DISHEVELLED3"/>
</dbReference>
<dbReference type="SMART" id="SM00021">
    <property type="entry name" value="DAX"/>
    <property type="match status" value="1"/>
</dbReference>
<dbReference type="SMART" id="SM00049">
    <property type="entry name" value="DEP"/>
    <property type="match status" value="1"/>
</dbReference>
<dbReference type="SMART" id="SM00228">
    <property type="entry name" value="PDZ"/>
    <property type="match status" value="1"/>
</dbReference>
<dbReference type="SUPFAM" id="SSF50156">
    <property type="entry name" value="PDZ domain-like"/>
    <property type="match status" value="1"/>
</dbReference>
<dbReference type="SUPFAM" id="SSF54236">
    <property type="entry name" value="Ubiquitin-like"/>
    <property type="match status" value="1"/>
</dbReference>
<dbReference type="SUPFAM" id="SSF46785">
    <property type="entry name" value="Winged helix' DNA-binding domain"/>
    <property type="match status" value="1"/>
</dbReference>
<dbReference type="PROSITE" id="PS50186">
    <property type="entry name" value="DEP"/>
    <property type="match status" value="1"/>
</dbReference>
<dbReference type="PROSITE" id="PS50841">
    <property type="entry name" value="DIX"/>
    <property type="match status" value="1"/>
</dbReference>
<dbReference type="PROSITE" id="PS50106">
    <property type="entry name" value="PDZ"/>
    <property type="match status" value="1"/>
</dbReference>
<proteinExistence type="evidence at protein level"/>
<evidence type="ECO:0000250" key="1">
    <source>
        <dbReference type="UniProtKB" id="O14641"/>
    </source>
</evidence>
<evidence type="ECO:0000250" key="2">
    <source>
        <dbReference type="UniProtKB" id="Q61062"/>
    </source>
</evidence>
<evidence type="ECO:0000255" key="3">
    <source>
        <dbReference type="PROSITE-ProRule" id="PRU00066"/>
    </source>
</evidence>
<evidence type="ECO:0000255" key="4">
    <source>
        <dbReference type="PROSITE-ProRule" id="PRU00069"/>
    </source>
</evidence>
<evidence type="ECO:0000255" key="5">
    <source>
        <dbReference type="PROSITE-ProRule" id="PRU00143"/>
    </source>
</evidence>
<evidence type="ECO:0000256" key="6">
    <source>
        <dbReference type="SAM" id="MobiDB-lite"/>
    </source>
</evidence>
<evidence type="ECO:0000269" key="7">
    <source>
    </source>
</evidence>
<evidence type="ECO:0000269" key="8">
    <source>
    </source>
</evidence>
<evidence type="ECO:0000269" key="9">
    <source>
    </source>
</evidence>
<evidence type="ECO:0000269" key="10">
    <source>
    </source>
</evidence>
<evidence type="ECO:0000269" key="11">
    <source>
    </source>
</evidence>
<evidence type="ECO:0000269" key="12">
    <source>
    </source>
</evidence>
<evidence type="ECO:0000269" key="13">
    <source>
    </source>
</evidence>
<evidence type="ECO:0000269" key="14">
    <source>
    </source>
</evidence>
<evidence type="ECO:0000269" key="15">
    <source>
    </source>
</evidence>
<evidence type="ECO:0000269" key="16">
    <source>
    </source>
</evidence>
<evidence type="ECO:0000269" key="17">
    <source>
    </source>
</evidence>
<evidence type="ECO:0000269" key="18">
    <source>
    </source>
</evidence>
<evidence type="ECO:0000303" key="19">
    <source>
    </source>
</evidence>
<evidence type="ECO:0000305" key="20"/>
<evidence type="ECO:0007744" key="21">
    <source>
    </source>
</evidence>
<evidence type="ECO:0007744" key="22">
    <source>
    </source>
</evidence>
<evidence type="ECO:0007744" key="23">
    <source>
    </source>
</evidence>
<evidence type="ECO:0007744" key="24">
    <source>
    </source>
</evidence>
<evidence type="ECO:0007829" key="25">
    <source>
        <dbReference type="PDB" id="6ZBQ"/>
    </source>
</evidence>
<evidence type="ECO:0007829" key="26">
    <source>
        <dbReference type="PDB" id="6ZBZ"/>
    </source>
</evidence>
<evidence type="ECO:0007829" key="27">
    <source>
        <dbReference type="PDB" id="6ZC6"/>
    </source>
</evidence>
<evidence type="ECO:0007829" key="28">
    <source>
        <dbReference type="PDB" id="6ZC8"/>
    </source>
</evidence>
<accession>Q92997</accession>
<accession>B4E3E5</accession>
<accession>D3DNT0</accession>
<accession>O14642</accession>
<accession>Q13531</accession>
<accession>Q8N5E9</accession>
<accession>Q92607</accession>
<organism>
    <name type="scientific">Homo sapiens</name>
    <name type="common">Human</name>
    <dbReference type="NCBI Taxonomy" id="9606"/>
    <lineage>
        <taxon>Eukaryota</taxon>
        <taxon>Metazoa</taxon>
        <taxon>Chordata</taxon>
        <taxon>Craniata</taxon>
        <taxon>Vertebrata</taxon>
        <taxon>Euteleostomi</taxon>
        <taxon>Mammalia</taxon>
        <taxon>Eutheria</taxon>
        <taxon>Euarchontoglires</taxon>
        <taxon>Primates</taxon>
        <taxon>Haplorrhini</taxon>
        <taxon>Catarrhini</taxon>
        <taxon>Hominidae</taxon>
        <taxon>Homo</taxon>
    </lineage>
</organism>
<name>DVL3_HUMAN</name>
<sequence length="716" mass="78055">MGETKIIYHLDGQETPYLVKLPLPAERVTLADFKGVLQRPSYKFFFKSMDDDFGVVKEEISDDNAKLPCFNGRVVSWLVSAEGSHPDPAPFCADNPSELPPPMERTGGIGDSRPPSFHPHAGGGSQENLDNDTETDSLVSAQRERPRRRDGPEHATRLNGTAKGERRREPGGYDSSSTLMSSELETTSFFDSDEDDSTSRFSSSTEQSSASRLMRRHKRRRRKQKVSRIERSSSFSSITDSTMSLNIITVTLNMEKYNFLGISIVGQSNERGDGGIYIGSIMKGGAVAADGRIEPGDMLLQVNEINFENMSNDDAVRVLREIVHKPGPITLTVAKCWDPSPRGCFTLPRSEPIRPIDPAAWVSHTAAMTGTFPAYGMSPSLSTITSTSSSITSSIPDTERLDDFHLSIHSDMAAIVKAMASPESGLEVRDRMWLKITIPNAFIGSDVVDWLYHNVEGFTDRREARKYASNLLKAGFIRHTVNKITFSEQCYYIFGDLCGNMANLSLHDHDGSSGASDQDTLAPLPHPGAAPWPMAFPYQYPPPPHPYNPHPGFPELGYSYGGGSASSQHSEGSRSSGSNRSGSDRRKEKDPKAGDSKSGGSGSESDHTTRSSLRGPRERAPSERSGPAASEHSHRSHHSLASSLRSHHTHPSYGPPGVPPLYGPPMLMMPPPPAAMGPPGAPPGRDLASVPPELTASRQSFRMAMGNPSEFFVDVM</sequence>
<comment type="function">
    <text evidence="2">Involved in the signal transduction pathway mediated by multiple Wnt genes.</text>
</comment>
<comment type="subunit">
    <text evidence="2 7 9 11 14 16 17">Interacts (via the PDZ domain) with the C-terminal regions of VANGL1 and VANGL2 (By similarity). Interacts (via the region containing both the PDZ and DEP domains) with LRRFIP2; the DIX domain may inhibit this interaction. Interacts with CYLD, CEP164 and DAB2. Interacts with DCDC2. Interacts with FOXK1 and FOXK2 (PubMed:25805136). Interacts with DAAM2 (By similarity).</text>
</comment>
<comment type="interaction">
    <interactant intactId="EBI-739789">
        <id>Q92997</id>
    </interactant>
    <interactant intactId="EBI-2602396">
        <id>Q9ULW3</id>
        <label>ABT1</label>
    </interactant>
    <organismsDiffer>false</organismsDiffer>
    <experiments>5</experiments>
</comment>
<comment type="interaction">
    <interactant intactId="EBI-739789">
        <id>Q92997</id>
    </interactant>
    <interactant intactId="EBI-714732">
        <id>O75689</id>
        <label>ADAP1</label>
    </interactant>
    <organismsDiffer>false</organismsDiffer>
    <experiments>3</experiments>
</comment>
<comment type="interaction">
    <interactant intactId="EBI-739789">
        <id>Q92997</id>
    </interactant>
    <interactant intactId="EBI-1042725">
        <id>Q02040</id>
        <label>AKAP17A</label>
    </interactant>
    <organismsDiffer>false</organismsDiffer>
    <experiments>3</experiments>
</comment>
<comment type="interaction">
    <interactant intactId="EBI-739789">
        <id>Q92997</id>
    </interactant>
    <interactant intactId="EBI-12170453">
        <id>Q8N2N9-4</id>
        <label>ANKRD36B</label>
    </interactant>
    <organismsDiffer>false</organismsDiffer>
    <experiments>3</experiments>
</comment>
<comment type="interaction">
    <interactant intactId="EBI-739789">
        <id>Q92997</id>
    </interactant>
    <interactant intactId="EBI-2371151">
        <id>Q9Y2T2</id>
        <label>AP3M1</label>
    </interactant>
    <organismsDiffer>false</organismsDiffer>
    <experiments>3</experiments>
</comment>
<comment type="interaction">
    <interactant intactId="EBI-739789">
        <id>Q92997</id>
    </interactant>
    <interactant intactId="EBI-77613">
        <id>P05067</id>
        <label>APP</label>
    </interactant>
    <organismsDiffer>false</organismsDiffer>
    <experiments>3</experiments>
</comment>
<comment type="interaction">
    <interactant intactId="EBI-739789">
        <id>Q92997</id>
    </interactant>
    <interactant intactId="EBI-742750">
        <id>Q8TBE0</id>
        <label>BAHD1</label>
    </interactant>
    <organismsDiffer>false</organismsDiffer>
    <experiments>4</experiments>
</comment>
<comment type="interaction">
    <interactant intactId="EBI-739789">
        <id>Q92997</id>
    </interactant>
    <interactant intactId="EBI-10181188">
        <id>Q8N7W2-2</id>
        <label>BEND7</label>
    </interactant>
    <organismsDiffer>false</organismsDiffer>
    <experiments>5</experiments>
</comment>
<comment type="interaction">
    <interactant intactId="EBI-739789">
        <id>Q92997</id>
    </interactant>
    <interactant intactId="EBI-711810">
        <id>O14503</id>
        <label>BHLHE40</label>
    </interactant>
    <organismsDiffer>false</organismsDiffer>
    <experiments>3</experiments>
</comment>
<comment type="interaction">
    <interactant intactId="EBI-739789">
        <id>Q92997</id>
    </interactant>
    <interactant intactId="EBI-712912">
        <id>Q9HC52</id>
        <label>CBX8</label>
    </interactant>
    <organismsDiffer>false</organismsDiffer>
    <experiments>3</experiments>
</comment>
<comment type="interaction">
    <interactant intactId="EBI-739789">
        <id>Q92997</id>
    </interactant>
    <interactant intactId="EBI-2836773">
        <id>Q9UK58</id>
        <label>CCNL1</label>
    </interactant>
    <organismsDiffer>false</organismsDiffer>
    <experiments>3</experiments>
</comment>
<comment type="interaction">
    <interactant intactId="EBI-739789">
        <id>Q92997</id>
    </interactant>
    <interactant intactId="EBI-8467076">
        <id>Q8N8U2</id>
        <label>CDYL2</label>
    </interactant>
    <organismsDiffer>false</organismsDiffer>
    <experiments>3</experiments>
</comment>
<comment type="interaction">
    <interactant intactId="EBI-739789">
        <id>Q92997</id>
    </interactant>
    <interactant intactId="EBI-3937015">
        <id>Q9UPV0</id>
        <label>CEP164</label>
    </interactant>
    <organismsDiffer>false</organismsDiffer>
    <experiments>5</experiments>
</comment>
<comment type="interaction">
    <interactant intactId="EBI-739789">
        <id>Q92997</id>
    </interactant>
    <interactant intactId="EBI-1104570">
        <id>Q8IYX8</id>
        <label>CEP57L1</label>
    </interactant>
    <organismsDiffer>false</organismsDiffer>
    <experiments>3</experiments>
</comment>
<comment type="interaction">
    <interactant intactId="EBI-739789">
        <id>Q92997</id>
    </interactant>
    <interactant intactId="EBI-739624">
        <id>Q8NHQ1</id>
        <label>CEP70</label>
    </interactant>
    <organismsDiffer>false</organismsDiffer>
    <experiments>3</experiments>
</comment>
<comment type="interaction">
    <interactant intactId="EBI-739789">
        <id>Q92997</id>
    </interactant>
    <interactant intactId="EBI-742887">
        <id>Q8TAP6</id>
        <label>CEP76</label>
    </interactant>
    <organismsDiffer>false</organismsDiffer>
    <experiments>3</experiments>
</comment>
<comment type="interaction">
    <interactant intactId="EBI-739789">
        <id>Q92997</id>
    </interactant>
    <interactant intactId="EBI-11981867">
        <id>P49759-3</id>
        <label>CLK1</label>
    </interactant>
    <organismsDiffer>false</organismsDiffer>
    <experiments>3</experiments>
</comment>
<comment type="interaction">
    <interactant intactId="EBI-739789">
        <id>Q92997</id>
    </interactant>
    <interactant intactId="EBI-10200977">
        <id>P21964-2</id>
        <label>COMT</label>
    </interactant>
    <organismsDiffer>false</organismsDiffer>
    <experiments>3</experiments>
</comment>
<comment type="interaction">
    <interactant intactId="EBI-739789">
        <id>Q92997</id>
    </interactant>
    <interactant intactId="EBI-751621">
        <id>P48730</id>
        <label>CSNK1D</label>
    </interactant>
    <organismsDiffer>false</organismsDiffer>
    <experiments>4</experiments>
</comment>
<comment type="interaction">
    <interactant intactId="EBI-739789">
        <id>Q92997</id>
    </interactant>
    <interactant intactId="EBI-749343">
        <id>P49674</id>
        <label>CSNK1E</label>
    </interactant>
    <organismsDiffer>false</organismsDiffer>
    <experiments>9</experiments>
</comment>
<comment type="interaction">
    <interactant intactId="EBI-739789">
        <id>Q92997</id>
    </interactant>
    <interactant intactId="EBI-347804">
        <id>P68400</id>
        <label>CSNK2A1</label>
    </interactant>
    <organismsDiffer>false</organismsDiffer>
    <experiments>5</experiments>
</comment>
<comment type="interaction">
    <interactant intactId="EBI-739789">
        <id>Q92997</id>
    </interactant>
    <interactant intactId="EBI-12153495">
        <id>P0DMU9</id>
        <label>CT45A10</label>
    </interactant>
    <organismsDiffer>false</organismsDiffer>
    <experiments>3</experiments>
</comment>
<comment type="interaction">
    <interactant intactId="EBI-739789">
        <id>Q92997</id>
    </interactant>
    <interactant intactId="EBI-8643558">
        <id>Q8NHU0</id>
        <label>CT45A3</label>
    </interactant>
    <organismsDiffer>false</organismsDiffer>
    <experiments>3</experiments>
</comment>
<comment type="interaction">
    <interactant intactId="EBI-739789">
        <id>Q92997</id>
    </interactant>
    <interactant intactId="EBI-3867333">
        <id>A8MQ03</id>
        <label>CYSRT1</label>
    </interactant>
    <organismsDiffer>false</organismsDiffer>
    <experiments>3</experiments>
</comment>
<comment type="interaction">
    <interactant intactId="EBI-739789">
        <id>Q92997</id>
    </interactant>
    <interactant intactId="EBI-723489">
        <id>O14640</id>
        <label>DVL1</label>
    </interactant>
    <organismsDiffer>false</organismsDiffer>
    <experiments>5</experiments>
</comment>
<comment type="interaction">
    <interactant intactId="EBI-739789">
        <id>Q92997</id>
    </interactant>
    <interactant intactId="EBI-10185025">
        <id>Q86TH3</id>
        <label>DVL1</label>
    </interactant>
    <organismsDiffer>false</organismsDiffer>
    <experiments>3</experiments>
</comment>
<comment type="interaction">
    <interactant intactId="EBI-739789">
        <id>Q92997</id>
    </interactant>
    <interactant intactId="EBI-1043343">
        <id>O60739</id>
        <label>EIF1B</label>
    </interactant>
    <organismsDiffer>false</organismsDiffer>
    <experiments>3</experiments>
</comment>
<comment type="interaction">
    <interactant intactId="EBI-739789">
        <id>Q92997</id>
    </interactant>
    <interactant intactId="EBI-353818">
        <id>O15371</id>
        <label>EIF3D</label>
    </interactant>
    <organismsDiffer>false</organismsDiffer>
    <experiments>3</experiments>
</comment>
<comment type="interaction">
    <interactant intactId="EBI-739789">
        <id>Q92997</id>
    </interactant>
    <interactant intactId="EBI-751248">
        <id>Q8NE31</id>
        <label>FAM13C</label>
    </interactant>
    <organismsDiffer>false</organismsDiffer>
    <experiments>3</experiments>
</comment>
<comment type="interaction">
    <interactant intactId="EBI-739789">
        <id>Q92997</id>
    </interactant>
    <interactant intactId="EBI-6658203">
        <id>Q86YD7</id>
        <label>FAM90A1</label>
    </interactant>
    <organismsDiffer>false</organismsDiffer>
    <experiments>3</experiments>
</comment>
<comment type="interaction">
    <interactant intactId="EBI-739789">
        <id>Q92997</id>
    </interactant>
    <interactant intactId="EBI-2513774">
        <id>O95363</id>
        <label>FARS2</label>
    </interactant>
    <organismsDiffer>false</organismsDiffer>
    <experiments>3</experiments>
</comment>
<comment type="interaction">
    <interactant intactId="EBI-739789">
        <id>Q92997</id>
    </interactant>
    <interactant intactId="EBI-11479104">
        <id>O43320</id>
        <label>FGF16</label>
    </interactant>
    <organismsDiffer>false</organismsDiffer>
    <experiments>3</experiments>
</comment>
<comment type="interaction">
    <interactant intactId="EBI-739789">
        <id>Q92997</id>
    </interactant>
    <interactant intactId="EBI-11533409">
        <id>Q96Q35-2</id>
        <label>FLACC1</label>
    </interactant>
    <organismsDiffer>false</organismsDiffer>
    <experiments>3</experiments>
</comment>
<comment type="interaction">
    <interactant intactId="EBI-739789">
        <id>Q92997</id>
    </interactant>
    <interactant intactId="EBI-372506">
        <id>Q8TAE8</id>
        <label>GADD45GIP1</label>
    </interactant>
    <organismsDiffer>false</organismsDiffer>
    <experiments>3</experiments>
</comment>
<comment type="interaction">
    <interactant intactId="EBI-739789">
        <id>Q92997</id>
    </interactant>
    <interactant intactId="EBI-25860013">
        <id>P28799-2</id>
        <label>GRN</label>
    </interactant>
    <organismsDiffer>false</organismsDiffer>
    <experiments>3</experiments>
</comment>
<comment type="interaction">
    <interactant intactId="EBI-739789">
        <id>Q92997</id>
    </interactant>
    <interactant intactId="EBI-748420">
        <id>Q9NSC5</id>
        <label>HOMER3</label>
    </interactant>
    <organismsDiffer>false</organismsDiffer>
    <experiments>3</experiments>
</comment>
<comment type="interaction">
    <interactant intactId="EBI-739789">
        <id>Q92997</id>
    </interactant>
    <interactant intactId="EBI-8470697">
        <id>P20719</id>
        <label>HOXA5</label>
    </interactant>
    <organismsDiffer>false</organismsDiffer>
    <experiments>3</experiments>
</comment>
<comment type="interaction">
    <interactant intactId="EBI-739789">
        <id>Q92997</id>
    </interactant>
    <interactant intactId="EBI-11955357">
        <id>Q00444</id>
        <label>HOXC5</label>
    </interactant>
    <organismsDiffer>false</organismsDiffer>
    <experiments>3</experiments>
</comment>
<comment type="interaction">
    <interactant intactId="EBI-739789">
        <id>Q92997</id>
    </interactant>
    <interactant intactId="EBI-1752118">
        <id>P31273</id>
        <label>HOXC8</label>
    </interactant>
    <organismsDiffer>false</organismsDiffer>
    <experiments>3</experiments>
</comment>
<comment type="interaction">
    <interactant intactId="EBI-739789">
        <id>Q92997</id>
    </interactant>
    <interactant intactId="EBI-715611">
        <id>Q9C086</id>
        <label>INO80B</label>
    </interactant>
    <organismsDiffer>false</organismsDiffer>
    <experiments>3</experiments>
</comment>
<comment type="interaction">
    <interactant intactId="EBI-739789">
        <id>Q92997</id>
    </interactant>
    <interactant intactId="EBI-1055254">
        <id>Q8WXH2</id>
        <label>JPH3</label>
    </interactant>
    <organismsDiffer>false</organismsDiffer>
    <experiments>3</experiments>
</comment>
<comment type="interaction">
    <interactant intactId="EBI-739789">
        <id>Q92997</id>
    </interactant>
    <interactant intactId="EBI-12024294">
        <id>Q674X7-2</id>
        <label>KAZN</label>
    </interactant>
    <organismsDiffer>false</organismsDiffer>
    <experiments>3</experiments>
</comment>
<comment type="interaction">
    <interactant intactId="EBI-739789">
        <id>Q92997</id>
    </interactant>
    <interactant intactId="EBI-2505886">
        <id>Q9H3F6</id>
        <label>KCTD10</label>
    </interactant>
    <organismsDiffer>false</organismsDiffer>
    <experiments>3</experiments>
</comment>
<comment type="interaction">
    <interactant intactId="EBI-739789">
        <id>Q92997</id>
    </interactant>
    <interactant intactId="EBI-11954971">
        <id>Q96MP8-2</id>
        <label>KCTD7</label>
    </interactant>
    <organismsDiffer>false</organismsDiffer>
    <experiments>3</experiments>
</comment>
<comment type="interaction">
    <interactant intactId="EBI-739789">
        <id>Q92997</id>
    </interactant>
    <interactant intactId="EBI-10975473">
        <id>O60333-2</id>
        <label>KIF1B</label>
    </interactant>
    <organismsDiffer>false</organismsDiffer>
    <experiments>3</experiments>
</comment>
<comment type="interaction">
    <interactant intactId="EBI-739789">
        <id>Q92997</id>
    </interactant>
    <interactant intactId="EBI-8284732">
        <id>Q13351</id>
        <label>KLF1</label>
    </interactant>
    <organismsDiffer>false</organismsDiffer>
    <experiments>3</experiments>
</comment>
<comment type="interaction">
    <interactant intactId="EBI-739789">
        <id>Q92997</id>
    </interactant>
    <interactant intactId="EBI-2796400">
        <id>Q9UIH9</id>
        <label>KLF15</label>
    </interactant>
    <organismsDiffer>false</organismsDiffer>
    <experiments>5</experiments>
</comment>
<comment type="interaction">
    <interactant intactId="EBI-739789">
        <id>Q92997</id>
    </interactant>
    <interactant intactId="EBI-8472267">
        <id>P57682</id>
        <label>KLF3</label>
    </interactant>
    <organismsDiffer>false</organismsDiffer>
    <experiments>3</experiments>
</comment>
<comment type="interaction">
    <interactant intactId="EBI-739789">
        <id>Q92997</id>
    </interactant>
    <interactant intactId="EBI-7232405">
        <id>O43474</id>
        <label>KLF4</label>
    </interactant>
    <organismsDiffer>false</organismsDiffer>
    <experiments>3</experiments>
</comment>
<comment type="interaction">
    <interactant intactId="EBI-739789">
        <id>Q92997</id>
    </interactant>
    <interactant intactId="EBI-740929">
        <id>Q53G59</id>
        <label>KLHL12</label>
    </interactant>
    <organismsDiffer>false</organismsDiffer>
    <experiments>4</experiments>
</comment>
<comment type="interaction">
    <interactant intactId="EBI-739789">
        <id>Q92997</id>
    </interactant>
    <interactant intactId="EBI-739546">
        <id>Q96PV6</id>
        <label>LENG8</label>
    </interactant>
    <organismsDiffer>false</organismsDiffer>
    <experiments>3</experiments>
</comment>
<comment type="interaction">
    <interactant intactId="EBI-739789">
        <id>Q92997</id>
    </interactant>
    <interactant intactId="EBI-2341787">
        <id>Q17RB8</id>
        <label>LONRF1</label>
    </interactant>
    <organismsDiffer>false</organismsDiffer>
    <experiments>3</experiments>
</comment>
<comment type="interaction">
    <interactant intactId="EBI-739789">
        <id>Q92997</id>
    </interactant>
    <interactant intactId="EBI-1023718">
        <id>Q9Y608</id>
        <label>LRRFIP2</label>
    </interactant>
    <organismsDiffer>false</organismsDiffer>
    <experiments>2</experiments>
</comment>
<comment type="interaction">
    <interactant intactId="EBI-739789">
        <id>Q92997</id>
    </interactant>
    <interactant intactId="EBI-5323863">
        <id>Q5S007</id>
        <label>LRRK2</label>
    </interactant>
    <organismsDiffer>false</organismsDiffer>
    <experiments>4</experiments>
</comment>
<comment type="interaction">
    <interactant intactId="EBI-739789">
        <id>Q92997</id>
    </interactant>
    <interactant intactId="EBI-10198848">
        <id>Q9P127</id>
        <label>LUZP4</label>
    </interactant>
    <organismsDiffer>false</organismsDiffer>
    <experiments>3</experiments>
</comment>
<comment type="interaction">
    <interactant intactId="EBI-739789">
        <id>Q92997</id>
    </interactant>
    <interactant intactId="EBI-10268010">
        <id>Q8N8X9</id>
        <label>MAB21L3</label>
    </interactant>
    <organismsDiffer>false</organismsDiffer>
    <experiments>3</experiments>
</comment>
<comment type="interaction">
    <interactant intactId="EBI-739789">
        <id>Q92997</id>
    </interactant>
    <interactant intactId="EBI-751857">
        <id>O15481</id>
        <label>MAGEB4</label>
    </interactant>
    <organismsDiffer>false</organismsDiffer>
    <experiments>3</experiments>
</comment>
<comment type="interaction">
    <interactant intactId="EBI-739789">
        <id>Q92997</id>
    </interactant>
    <interactant intactId="EBI-746778">
        <id>Q96A72</id>
        <label>MAGOHB</label>
    </interactant>
    <organismsDiffer>false</organismsDiffer>
    <experiments>3</experiments>
</comment>
<comment type="interaction">
    <interactant intactId="EBI-739789">
        <id>Q92997</id>
    </interactant>
    <interactant intactId="EBI-742459">
        <id>Q9BU76</id>
        <label>MMTAG2</label>
    </interactant>
    <organismsDiffer>false</organismsDiffer>
    <experiments>3</experiments>
</comment>
<comment type="interaction">
    <interactant intactId="EBI-739789">
        <id>Q92997</id>
    </interactant>
    <interactant intactId="EBI-11061759">
        <id>P23511-2</id>
        <label>NFYA</label>
    </interactant>
    <organismsDiffer>false</organismsDiffer>
    <experiments>3</experiments>
</comment>
<comment type="interaction">
    <interactant intactId="EBI-739789">
        <id>Q92997</id>
    </interactant>
    <interactant intactId="EBI-1538217">
        <id>Q969G9</id>
        <label>NKD1</label>
    </interactant>
    <organismsDiffer>false</organismsDiffer>
    <experiments>3</experiments>
</comment>
<comment type="interaction">
    <interactant intactId="EBI-739789">
        <id>Q92997</id>
    </interactant>
    <interactant intactId="EBI-716098">
        <id>Q9UGY1</id>
        <label>NOL12</label>
    </interactant>
    <organismsDiffer>false</organismsDiffer>
    <experiments>3</experiments>
</comment>
<comment type="interaction">
    <interactant intactId="EBI-739789">
        <id>Q92997</id>
    </interactant>
    <interactant intactId="EBI-398874">
        <id>Q9UBU9</id>
        <label>NXF1</label>
    </interactant>
    <organismsDiffer>false</organismsDiffer>
    <experiments>3</experiments>
</comment>
<comment type="interaction">
    <interactant intactId="EBI-739789">
        <id>Q92997</id>
    </interactant>
    <interactant intactId="EBI-11022007">
        <id>Q9HBE1-4</id>
        <label>PATZ1</label>
    </interactant>
    <organismsDiffer>false</organismsDiffer>
    <experiments>3</experiments>
</comment>
<comment type="interaction">
    <interactant intactId="EBI-739789">
        <id>Q92997</id>
    </interactant>
    <interactant intactId="EBI-2339674">
        <id>Q5T6S3</id>
        <label>PHF19</label>
    </interactant>
    <organismsDiffer>false</organismsDiffer>
    <experiments>3</experiments>
</comment>
<comment type="interaction">
    <interactant intactId="EBI-739789">
        <id>Q92997</id>
    </interactant>
    <interactant intactId="EBI-748265">
        <id>P78337</id>
        <label>PITX1</label>
    </interactant>
    <organismsDiffer>false</organismsDiffer>
    <experiments>4</experiments>
</comment>
<comment type="interaction">
    <interactant intactId="EBI-739789">
        <id>Q92997</id>
    </interactant>
    <interactant intactId="EBI-2876622">
        <id>Q9UPG8</id>
        <label>PLAGL2</label>
    </interactant>
    <organismsDiffer>false</organismsDiffer>
    <experiments>3</experiments>
</comment>
<comment type="interaction">
    <interactant intactId="EBI-739789">
        <id>Q92997</id>
    </interactant>
    <interactant intactId="EBI-1045072">
        <id>Q96T60</id>
        <label>PNKP</label>
    </interactant>
    <organismsDiffer>false</organismsDiffer>
    <experiments>3</experiments>
</comment>
<comment type="interaction">
    <interactant intactId="EBI-739789">
        <id>Q92997</id>
    </interactant>
    <interactant intactId="EBI-10293968">
        <id>Q96T49</id>
        <label>PPP1R16B</label>
    </interactant>
    <organismsDiffer>false</organismsDiffer>
    <experiments>3</experiments>
</comment>
<comment type="interaction">
    <interactant intactId="EBI-739789">
        <id>Q92997</id>
    </interactant>
    <interactant intactId="EBI-2348662">
        <id>Q96MT3</id>
        <label>PRICKLE1</label>
    </interactant>
    <organismsDiffer>false</organismsDiffer>
    <experiments>3</experiments>
</comment>
<comment type="interaction">
    <interactant intactId="EBI-739789">
        <id>Q92997</id>
    </interactant>
    <interactant intactId="EBI-1383852">
        <id>P54646</id>
        <label>PRKAA2</label>
    </interactant>
    <organismsDiffer>false</organismsDiffer>
    <experiments>3</experiments>
</comment>
<comment type="interaction">
    <interactant intactId="EBI-739789">
        <id>Q92997</id>
    </interactant>
    <interactant intactId="EBI-2798416">
        <id>Q99633</id>
        <label>PRPF18</label>
    </interactant>
    <organismsDiffer>false</organismsDiffer>
    <experiments>3</experiments>
</comment>
<comment type="interaction">
    <interactant intactId="EBI-739789">
        <id>Q92997</id>
    </interactant>
    <interactant intactId="EBI-744322">
        <id>O43395</id>
        <label>PRPF3</label>
    </interactant>
    <organismsDiffer>false</organismsDiffer>
    <experiments>2</experiments>
</comment>
<comment type="interaction">
    <interactant intactId="EBI-739789">
        <id>Q92997</id>
    </interactant>
    <interactant intactId="EBI-1567797">
        <id>Q8WWY3</id>
        <label>PRPF31</label>
    </interactant>
    <organismsDiffer>false</organismsDiffer>
    <experiments>3</experiments>
</comment>
<comment type="interaction">
    <interactant intactId="EBI-739789">
        <id>Q92997</id>
    </interactant>
    <interactant intactId="EBI-715374">
        <id>Q8NAV1</id>
        <label>PRPF38A</label>
    </interactant>
    <organismsDiffer>false</organismsDiffer>
    <experiments>3</experiments>
</comment>
<comment type="interaction">
    <interactant intactId="EBI-739789">
        <id>Q92997</id>
    </interactant>
    <interactant intactId="EBI-749195">
        <id>P60891</id>
        <label>PRPS1</label>
    </interactant>
    <organismsDiffer>false</organismsDiffer>
    <experiments>3</experiments>
</comment>
<comment type="interaction">
    <interactant intactId="EBI-739789">
        <id>Q92997</id>
    </interactant>
    <interactant intactId="EBI-740924">
        <id>Q9NZ81</id>
        <label>PRR13</label>
    </interactant>
    <organismsDiffer>false</organismsDiffer>
    <experiments>3</experiments>
</comment>
<comment type="interaction">
    <interactant intactId="EBI-739789">
        <id>Q92997</id>
    </interactant>
    <interactant intactId="EBI-12754095">
        <id>P86480</id>
        <label>PRR20D</label>
    </interactant>
    <organismsDiffer>false</organismsDiffer>
    <experiments>3</experiments>
</comment>
<comment type="interaction">
    <interactant intactId="EBI-739789">
        <id>Q92997</id>
    </interactant>
    <interactant intactId="EBI-355546">
        <id>P61289</id>
        <label>PSME3</label>
    </interactant>
    <organismsDiffer>false</organismsDiffer>
    <experiments>3</experiments>
</comment>
<comment type="interaction">
    <interactant intactId="EBI-739789">
        <id>Q92997</id>
    </interactant>
    <interactant intactId="EBI-10269922">
        <id>Q8NDT2-2</id>
        <label>RBM15B</label>
    </interactant>
    <organismsDiffer>false</organismsDiffer>
    <experiments>3</experiments>
</comment>
<comment type="interaction">
    <interactant intactId="EBI-739789">
        <id>Q92997</id>
    </interactant>
    <interactant intactId="EBI-395290">
        <id>Q14498</id>
        <label>RBM39</label>
    </interactant>
    <organismsDiffer>false</organismsDiffer>
    <experiments>3</experiments>
</comment>
<comment type="interaction">
    <interactant intactId="EBI-739789">
        <id>Q92997</id>
    </interactant>
    <interactant intactId="EBI-12002474">
        <id>Q2KHN1</id>
        <label>RNF151</label>
    </interactant>
    <organismsDiffer>false</organismsDiffer>
    <experiments>3</experiments>
</comment>
<comment type="interaction">
    <interactant intactId="EBI-739789">
        <id>Q92997</id>
    </interactant>
    <interactant intactId="EBI-11027771">
        <id>P62913-2</id>
        <label>RPL11</label>
    </interactant>
    <organismsDiffer>false</organismsDiffer>
    <experiments>3</experiments>
</comment>
<comment type="interaction">
    <interactant intactId="EBI-739789">
        <id>Q92997</id>
    </interactant>
    <interactant intactId="EBI-2008793">
        <id>O43159</id>
        <label>RRP8</label>
    </interactant>
    <organismsDiffer>false</organismsDiffer>
    <experiments>3</experiments>
</comment>
<comment type="interaction">
    <interactant intactId="EBI-739789">
        <id>Q92997</id>
    </interactant>
    <interactant intactId="EBI-724442">
        <id>P57060</id>
        <label>RWDD2B</label>
    </interactant>
    <organismsDiffer>false</organismsDiffer>
    <experiments>3</experiments>
</comment>
<comment type="interaction">
    <interactant intactId="EBI-739789">
        <id>Q92997</id>
    </interactant>
    <interactant intactId="EBI-2340040">
        <id>Q9HAJ7</id>
        <label>SAP30L</label>
    </interactant>
    <organismsDiffer>false</organismsDiffer>
    <experiments>3</experiments>
</comment>
<comment type="interaction">
    <interactant intactId="EBI-739789">
        <id>Q92997</id>
    </interactant>
    <interactant intactId="EBI-11955083">
        <id>Q9NUL5-4</id>
        <label>SHFL</label>
    </interactant>
    <organismsDiffer>false</organismsDiffer>
    <experiments>3</experiments>
</comment>
<comment type="interaction">
    <interactant intactId="EBI-739789">
        <id>Q92997</id>
    </interactant>
    <interactant intactId="EBI-1802965">
        <id>Q96EB6</id>
        <label>SIRT1</label>
    </interactant>
    <organismsDiffer>false</organismsDiffer>
    <experiments>3</experiments>
</comment>
<comment type="interaction">
    <interactant intactId="EBI-739789">
        <id>Q92997</id>
    </interactant>
    <interactant intactId="EBI-749336">
        <id>Q8TAD8</id>
        <label>SNIP1</label>
    </interactant>
    <organismsDiffer>false</organismsDiffer>
    <experiments>3</experiments>
</comment>
<comment type="interaction">
    <interactant intactId="EBI-739789">
        <id>Q92997</id>
    </interactant>
    <interactant intactId="EBI-12310305">
        <id>Q96L94-2</id>
        <label>SNX22</label>
    </interactant>
    <organismsDiffer>false</organismsDiffer>
    <experiments>3</experiments>
</comment>
<comment type="interaction">
    <interactant intactId="EBI-739789">
        <id>Q92997</id>
    </interactant>
    <interactant intactId="EBI-741237">
        <id>O60504</id>
        <label>SORBS3</label>
    </interactant>
    <organismsDiffer>false</organismsDiffer>
    <experiments>3</experiments>
</comment>
<comment type="interaction">
    <interactant intactId="EBI-739789">
        <id>Q92997</id>
    </interactant>
    <interactant intactId="EBI-1211440">
        <id>P27105</id>
        <label>STOM</label>
    </interactant>
    <organismsDiffer>false</organismsDiffer>
    <experiments>3</experiments>
</comment>
<comment type="interaction">
    <interactant intactId="EBI-739789">
        <id>Q92997</id>
    </interactant>
    <interactant intactId="EBI-349968">
        <id>O43463</id>
        <label>SUV39H1</label>
    </interactant>
    <organismsDiffer>false</organismsDiffer>
    <experiments>3</experiments>
</comment>
<comment type="interaction">
    <interactant intactId="EBI-739789">
        <id>Q92997</id>
    </interactant>
    <interactant intactId="EBI-10246152">
        <id>Q5T7P8-2</id>
        <label>SYT6</label>
    </interactant>
    <organismsDiffer>false</organismsDiffer>
    <experiments>6</experiments>
</comment>
<comment type="interaction">
    <interactant intactId="EBI-739789">
        <id>Q92997</id>
    </interactant>
    <interactant intactId="EBI-747142">
        <id>Q96C24</id>
        <label>SYTL4</label>
    </interactant>
    <organismsDiffer>false</organismsDiffer>
    <experiments>3</experiments>
</comment>
<comment type="interaction">
    <interactant intactId="EBI-739789">
        <id>Q92997</id>
    </interactant>
    <interactant intactId="EBI-716225">
        <id>P62380</id>
        <label>TBPL1</label>
    </interactant>
    <organismsDiffer>false</organismsDiffer>
    <experiments>3</experiments>
</comment>
<comment type="interaction">
    <interactant intactId="EBI-739789">
        <id>Q92997</id>
    </interactant>
    <interactant intactId="EBI-710310">
        <id>Q15560</id>
        <label>TCEA2</label>
    </interactant>
    <organismsDiffer>false</organismsDiffer>
    <experiments>3</experiments>
</comment>
<comment type="interaction">
    <interactant intactId="EBI-739789">
        <id>Q92997</id>
    </interactant>
    <interactant intactId="EBI-11955057">
        <id>Q8N8B7-2</id>
        <label>TCEANC</label>
    </interactant>
    <organismsDiffer>false</organismsDiffer>
    <experiments>3</experiments>
</comment>
<comment type="interaction">
    <interactant intactId="EBI-739789">
        <id>Q92997</id>
    </interactant>
    <interactant intactId="EBI-357061">
        <id>Q92734</id>
        <label>TFG</label>
    </interactant>
    <organismsDiffer>false</organismsDiffer>
    <experiments>3</experiments>
</comment>
<comment type="interaction">
    <interactant intactId="EBI-739789">
        <id>Q92997</id>
    </interactant>
    <interactant intactId="EBI-741350">
        <id>Q9BT49</id>
        <label>THAP7</label>
    </interactant>
    <organismsDiffer>false</organismsDiffer>
    <experiments>3</experiments>
</comment>
<comment type="interaction">
    <interactant intactId="EBI-739789">
        <id>Q92997</id>
    </interactant>
    <interactant intactId="EBI-11741437">
        <id>Q08117-2</id>
        <label>TLE5</label>
    </interactant>
    <organismsDiffer>false</organismsDiffer>
    <experiments>3</experiments>
</comment>
<comment type="interaction">
    <interactant intactId="EBI-739789">
        <id>Q92997</id>
    </interactant>
    <interactant intactId="EBI-752102">
        <id>Q8WVP5</id>
        <label>TNFAIP8L1</label>
    </interactant>
    <organismsDiffer>false</organismsDiffer>
    <experiments>6</experiments>
</comment>
<comment type="interaction">
    <interactant intactId="EBI-739789">
        <id>Q92997</id>
    </interactant>
    <interactant intactId="EBI-10196343">
        <id>P09430</id>
        <label>TNP1</label>
    </interactant>
    <organismsDiffer>false</organismsDiffer>
    <experiments>3</experiments>
</comment>
<comment type="interaction">
    <interactant intactId="EBI-739789">
        <id>Q92997</id>
    </interactant>
    <interactant intactId="EBI-355744">
        <id>Q12933</id>
        <label>TRAF2</label>
    </interactant>
    <organismsDiffer>false</organismsDiffer>
    <experiments>3</experiments>
</comment>
<comment type="interaction">
    <interactant intactId="EBI-739789">
        <id>Q92997</id>
    </interactant>
    <interactant intactId="EBI-725997">
        <id>Q8WV44</id>
        <label>TRIM41</label>
    </interactant>
    <organismsDiffer>false</organismsDiffer>
    <experiments>3</experiments>
</comment>
<comment type="interaction">
    <interactant intactId="EBI-739789">
        <id>Q92997</id>
    </interactant>
    <interactant intactId="EBI-1044160">
        <id>Q15631</id>
        <label>TSN</label>
    </interactant>
    <organismsDiffer>false</organismsDiffer>
    <experiments>3</experiments>
</comment>
<comment type="interaction">
    <interactant intactId="EBI-739789">
        <id>Q92997</id>
    </interactant>
    <interactant intactId="EBI-723389">
        <id>Q6FI91</id>
        <label>TSPYL</label>
    </interactant>
    <organismsDiffer>false</organismsDiffer>
    <experiments>3</experiments>
</comment>
<comment type="interaction">
    <interactant intactId="EBI-739789">
        <id>Q92997</id>
    </interactant>
    <interactant intactId="EBI-12023322">
        <id>Q8N831</id>
        <label>TSPYL6</label>
    </interactant>
    <organismsDiffer>false</organismsDiffer>
    <experiments>3</experiments>
</comment>
<comment type="interaction">
    <interactant intactId="EBI-739789">
        <id>Q92997</id>
    </interactant>
    <interactant intactId="EBI-714067">
        <id>Q9NQZ2</id>
        <label>UTP3</label>
    </interactant>
    <organismsDiffer>false</organismsDiffer>
    <experiments>3</experiments>
</comment>
<comment type="interaction">
    <interactant intactId="EBI-739789">
        <id>Q92997</id>
    </interactant>
    <interactant intactId="EBI-12227803">
        <id>Q5SQQ9-2</id>
        <label>VAX1</label>
    </interactant>
    <organismsDiffer>false</organismsDiffer>
    <experiments>3</experiments>
</comment>
<comment type="interaction">
    <interactant intactId="EBI-739789">
        <id>Q92997</id>
    </interactant>
    <interactant intactId="EBI-12032042">
        <id>Q64LD2-2</id>
        <label>WDR25</label>
    </interactant>
    <organismsDiffer>false</organismsDiffer>
    <experiments>3</experiments>
</comment>
<comment type="interaction">
    <interactant intactId="EBI-739789">
        <id>Q92997</id>
    </interactant>
    <interactant intactId="EBI-720609">
        <id>O76024</id>
        <label>WFS1</label>
    </interactant>
    <organismsDiffer>false</organismsDiffer>
    <experiments>3</experiments>
</comment>
<comment type="interaction">
    <interactant intactId="EBI-739789">
        <id>Q92997</id>
    </interactant>
    <interactant intactId="EBI-2320534">
        <id>P19544</id>
        <label>WT1</label>
    </interactant>
    <organismsDiffer>false</organismsDiffer>
    <experiments>3</experiments>
</comment>
<comment type="interaction">
    <interactant intactId="EBI-739789">
        <id>Q92997</id>
    </interactant>
    <interactant intactId="EBI-295222">
        <id>P23025</id>
        <label>XPA</label>
    </interactant>
    <organismsDiffer>false</organismsDiffer>
    <experiments>3</experiments>
</comment>
<comment type="interaction">
    <interactant intactId="EBI-739789">
        <id>Q92997</id>
    </interactant>
    <interactant intactId="EBI-2849854">
        <id>Q96MU7</id>
        <label>YTHDC1</label>
    </interactant>
    <organismsDiffer>false</organismsDiffer>
    <experiments>6</experiments>
</comment>
<comment type="interaction">
    <interactant intactId="EBI-739789">
        <id>Q92997</id>
    </interactant>
    <interactant intactId="EBI-744471">
        <id>O43167</id>
        <label>ZBTB24</label>
    </interactant>
    <organismsDiffer>false</organismsDiffer>
    <experiments>3</experiments>
</comment>
<comment type="interaction">
    <interactant intactId="EBI-739789">
        <id>Q92997</id>
    </interactant>
    <interactant intactId="EBI-3918996">
        <id>Q9HCK0</id>
        <label>ZBTB26</label>
    </interactant>
    <organismsDiffer>false</organismsDiffer>
    <experiments>3</experiments>
</comment>
<comment type="interaction">
    <interactant intactId="EBI-739789">
        <id>Q92997</id>
    </interactant>
    <interactant intactId="EBI-7781767">
        <id>Q9UFB7</id>
        <label>ZBTB47</label>
    </interactant>
    <organismsDiffer>false</organismsDiffer>
    <experiments>3</experiments>
</comment>
<comment type="interaction">
    <interactant intactId="EBI-739789">
        <id>Q92997</id>
    </interactant>
    <interactant intactId="EBI-744864">
        <id>P10074</id>
        <label>ZBTB48</label>
    </interactant>
    <organismsDiffer>false</organismsDiffer>
    <experiments>4</experiments>
</comment>
<comment type="interaction">
    <interactant intactId="EBI-739789">
        <id>Q92997</id>
    </interactant>
    <interactant intactId="EBI-742740">
        <id>Q96BR9</id>
        <label>ZBTB8A</label>
    </interactant>
    <organismsDiffer>false</organismsDiffer>
    <experiments>3</experiments>
</comment>
<comment type="interaction">
    <interactant intactId="EBI-739789">
        <id>Q92997</id>
    </interactant>
    <interactant intactId="EBI-12879708">
        <id>Q9NU63-3</id>
        <label>ZFP57</label>
    </interactant>
    <organismsDiffer>false</organismsDiffer>
    <experiments>3</experiments>
</comment>
<comment type="interaction">
    <interactant intactId="EBI-739789">
        <id>Q92997</id>
    </interactant>
    <interactant intactId="EBI-741694">
        <id>P49910</id>
        <label>ZNF165</label>
    </interactant>
    <organismsDiffer>false</organismsDiffer>
    <experiments>3</experiments>
</comment>
<comment type="interaction">
    <interactant intactId="EBI-739789">
        <id>Q92997</id>
    </interactant>
    <interactant intactId="EBI-8489229">
        <id>Q9BSG1</id>
        <label>ZNF2</label>
    </interactant>
    <organismsDiffer>false</organismsDiffer>
    <experiments>3</experiments>
</comment>
<comment type="interaction">
    <interactant intactId="EBI-739789">
        <id>Q92997</id>
    </interactant>
    <interactant intactId="EBI-4395808">
        <id>O43296</id>
        <label>ZNF264</label>
    </interactant>
    <organismsDiffer>false</organismsDiffer>
    <experiments>3</experiments>
</comment>
<comment type="interaction">
    <interactant intactId="EBI-739789">
        <id>Q92997</id>
    </interactant>
    <interactant intactId="EBI-2826570">
        <id>Q14C61</id>
        <label>ZNF264</label>
    </interactant>
    <organismsDiffer>false</organismsDiffer>
    <experiments>3</experiments>
</comment>
<comment type="interaction">
    <interactant intactId="EBI-739789">
        <id>Q92997</id>
    </interactant>
    <interactant intactId="EBI-11993110">
        <id>Q9P2F9</id>
        <label>ZNF319</label>
    </interactant>
    <organismsDiffer>false</organismsDiffer>
    <experiments>3</experiments>
</comment>
<comment type="interaction">
    <interactant intactId="EBI-739789">
        <id>Q92997</id>
    </interactant>
    <interactant intactId="EBI-347633">
        <id>Q9H9D4</id>
        <label>ZNF408</label>
    </interactant>
    <organismsDiffer>false</organismsDiffer>
    <experiments>4</experiments>
</comment>
<comment type="interaction">
    <interactant intactId="EBI-739789">
        <id>Q92997</id>
    </interactant>
    <interactant intactId="EBI-740727">
        <id>Q8TAU3</id>
        <label>ZNF417</label>
    </interactant>
    <organismsDiffer>false</organismsDiffer>
    <experiments>3</experiments>
</comment>
<comment type="interaction">
    <interactant intactId="EBI-739789">
        <id>Q92997</id>
    </interactant>
    <interactant intactId="EBI-17216366">
        <id>Q8N8Z8</id>
        <label>ZNF441</label>
    </interactant>
    <organismsDiffer>false</organismsDiffer>
    <experiments>3</experiments>
</comment>
<comment type="interaction">
    <interactant intactId="EBI-739789">
        <id>Q92997</id>
    </interactant>
    <interactant intactId="EBI-12010736">
        <id>Q8N0Y2-2</id>
        <label>ZNF444</label>
    </interactant>
    <organismsDiffer>false</organismsDiffer>
    <experiments>3</experiments>
</comment>
<comment type="interaction">
    <interactant intactId="EBI-739789">
        <id>Q92997</id>
    </interactant>
    <interactant intactId="EBI-10486136">
        <id>Q6ZNH5</id>
        <label>ZNF497</label>
    </interactant>
    <organismsDiffer>false</organismsDiffer>
    <experiments>3</experiments>
</comment>
<comment type="interaction">
    <interactant intactId="EBI-739789">
        <id>Q92997</id>
    </interactant>
    <interactant intactId="EBI-2555731">
        <id>Q9H707</id>
        <label>ZNF552</label>
    </interactant>
    <organismsDiffer>false</organismsDiffer>
    <experiments>3</experiments>
</comment>
<comment type="interaction">
    <interactant intactId="EBI-739789">
        <id>Q92997</id>
    </interactant>
    <interactant intactId="EBI-745520">
        <id>Q9P0T4</id>
        <label>ZNF581</label>
    </interactant>
    <organismsDiffer>false</organismsDiffer>
    <experiments>3</experiments>
</comment>
<comment type="interaction">
    <interactant intactId="EBI-739789">
        <id>Q92997</id>
    </interactant>
    <interactant intactId="EBI-11985915">
        <id>Q5T619</id>
        <label>ZNF648</label>
    </interactant>
    <organismsDiffer>false</organismsDiffer>
    <experiments>3</experiments>
</comment>
<comment type="interaction">
    <interactant intactId="EBI-739789">
        <id>Q92997</id>
    </interactant>
    <interactant intactId="EBI-11090299">
        <id>Q9H7X3</id>
        <label>ZNF696</label>
    </interactant>
    <organismsDiffer>false</organismsDiffer>
    <experiments>3</experiments>
</comment>
<comment type="interaction">
    <interactant intactId="EBI-739789">
        <id>Q92997</id>
    </interactant>
    <interactant intactId="EBI-10265733">
        <id>Q8N508</id>
        <label>ZNF697</label>
    </interactant>
    <organismsDiffer>false</organismsDiffer>
    <experiments>3</experiments>
</comment>
<comment type="interaction">
    <interactant intactId="EBI-739789">
        <id>Q92997</id>
    </interactant>
    <interactant intactId="EBI-10217363">
        <id>Q32M78</id>
        <label>ZNF699</label>
    </interactant>
    <organismsDiffer>false</organismsDiffer>
    <experiments>3</experiments>
</comment>
<comment type="interaction">
    <interactant intactId="EBI-739789">
        <id>Q92997</id>
    </interactant>
    <interactant intactId="EBI-7138235">
        <id>Q9NQZ8</id>
        <label>ZNF71</label>
    </interactant>
    <organismsDiffer>false</organismsDiffer>
    <experiments>3</experiments>
</comment>
<comment type="interaction">
    <interactant intactId="EBI-739789">
        <id>Q92997</id>
    </interactant>
    <interactant intactId="EBI-745775">
        <id>Q96H86</id>
        <label>ZNF764</label>
    </interactant>
    <organismsDiffer>false</organismsDiffer>
    <experiments>3</experiments>
</comment>
<comment type="interaction">
    <interactant intactId="EBI-739789">
        <id>Q92997</id>
    </interactant>
    <interactant intactId="EBI-10251462">
        <id>Q6NX45</id>
        <label>ZNF774</label>
    </interactant>
    <organismsDiffer>false</organismsDiffer>
    <experiments>6</experiments>
</comment>
<comment type="interaction">
    <interactant intactId="EBI-739789">
        <id>Q92997</id>
    </interactant>
    <interactant intactId="EBI-7149881">
        <id>Q96BV0</id>
        <label>ZNF775</label>
    </interactant>
    <organismsDiffer>false</organismsDiffer>
    <experiments>3</experiments>
</comment>
<comment type="interaction">
    <interactant intactId="EBI-739789">
        <id>Q92997</id>
    </interactant>
    <interactant intactId="EBI-10240849">
        <id>Q3KQV3</id>
        <label>ZNF792</label>
    </interactant>
    <organismsDiffer>false</organismsDiffer>
    <experiments>3</experiments>
</comment>
<comment type="interaction">
    <interactant intactId="EBI-739789">
        <id>Q92997</id>
    </interactant>
    <interactant intactId="EBI-14544035">
        <id>O75541-2</id>
        <label>ZNF821</label>
    </interactant>
    <organismsDiffer>false</organismsDiffer>
    <experiments>3</experiments>
</comment>
<comment type="interaction">
    <interactant intactId="EBI-739789">
        <id>Q92997</id>
    </interactant>
    <interactant intactId="EBI-11962574">
        <id>Q96EG3</id>
        <label>ZNF837</label>
    </interactant>
    <organismsDiffer>false</organismsDiffer>
    <experiments>3</experiments>
</comment>
<comment type="interaction">
    <interactant intactId="EBI-739789">
        <id>Q92997</id>
    </interactant>
    <interactant intactId="EBI-6657923">
        <id>Q15696</id>
        <label>ZRSR2</label>
    </interactant>
    <organismsDiffer>false</organismsDiffer>
    <experiments>3</experiments>
</comment>
<comment type="interaction">
    <interactant intactId="EBI-739789">
        <id>Q92997</id>
    </interactant>
    <interactant intactId="EBI-10281938">
        <id>Q9Y5A6</id>
        <label>ZSCAN21</label>
    </interactant>
    <organismsDiffer>false</organismsDiffer>
    <experiments>3</experiments>
</comment>
<comment type="interaction">
    <interactant intactId="EBI-739789">
        <id>Q92997</id>
    </interactant>
    <interactant intactId="EBI-10178224">
        <id>P10073</id>
        <label>ZSCAN22</label>
    </interactant>
    <organismsDiffer>false</organismsDiffer>
    <experiments>3</experiments>
</comment>
<comment type="interaction">
    <interactant intactId="EBI-739789">
        <id>Q92997</id>
    </interactant>
    <interactant intactId="EBI-14650477">
        <id>Q6NSZ9-2</id>
        <label>ZSCAN25</label>
    </interactant>
    <organismsDiffer>false</organismsDiffer>
    <experiments>3</experiments>
</comment>
<comment type="interaction">
    <interactant intactId="EBI-739789">
        <id>Q92997</id>
    </interactant>
    <interactant intactId="EBI-1391846">
        <id>P98078</id>
        <label>Dab2</label>
    </interactant>
    <organismsDiffer>true</organismsDiffer>
    <experiments>2</experiments>
</comment>
<comment type="subcellular location">
    <subcellularLocation>
        <location evidence="1">Cytoplasm</location>
    </subcellularLocation>
</comment>
<comment type="alternative products">
    <event type="alternative splicing"/>
    <isoform>
        <id>Q92997-1</id>
        <name>1</name>
        <sequence type="displayed"/>
    </isoform>
    <isoform>
        <id>Q92997-2</id>
        <name>2</name>
        <sequence type="described" ref="VSP_053371"/>
    </isoform>
</comment>
<comment type="PTM">
    <text evidence="11">Ubiquitinated. Deubiquitinated by CYLD, which acts on 'Lys-63'-linked ubiquitin chains.</text>
</comment>
<comment type="PTM">
    <text evidence="12 13">Phosphorylated by CSNK1D.</text>
</comment>
<comment type="PTM">
    <text evidence="13 15">Arginine methylation may function as a switch in regulation of function in Wnt signaling.</text>
</comment>
<comment type="disease" evidence="18">
    <disease id="DI-04701">
        <name>Robinow syndrome, autosomal dominant 3</name>
        <acronym>DRS3</acronym>
        <description>A form of Robinow syndrome, a rare skeletal dysplasia syndrome characterized by dysmorphic features resembling a fetal face, mesomelic limb shortening, genital hypoplasia, renal anomalies, and costovertebral segmentation defects.</description>
        <dbReference type="MIM" id="616894"/>
    </disease>
    <text>The disease is caused by variants affecting the gene represented in this entry.</text>
</comment>
<comment type="similarity">
    <text evidence="20">Belongs to the DSH family.</text>
</comment>
<comment type="sequence caution" evidence="20">
    <conflict type="erroneous initiation">
        <sequence resource="EMBL-CDS" id="BAA13199"/>
    </conflict>
</comment>
<feature type="chain" id="PRO_0000145749" description="Segment polarity protein dishevelled homolog DVL-3">
    <location>
        <begin position="1"/>
        <end position="716"/>
    </location>
</feature>
<feature type="domain" description="DIX" evidence="4">
    <location>
        <begin position="1"/>
        <end position="82"/>
    </location>
</feature>
<feature type="domain" description="PDZ" evidence="5">
    <location>
        <begin position="249"/>
        <end position="321"/>
    </location>
</feature>
<feature type="domain" description="DEP" evidence="3">
    <location>
        <begin position="422"/>
        <end position="496"/>
    </location>
</feature>
<feature type="region of interest" description="Disordered" evidence="6">
    <location>
        <begin position="85"/>
        <end position="235"/>
    </location>
</feature>
<feature type="region of interest" description="Disordered" evidence="6">
    <location>
        <begin position="546"/>
        <end position="691"/>
    </location>
</feature>
<feature type="compositionally biased region" description="Basic and acidic residues" evidence="6">
    <location>
        <begin position="142"/>
        <end position="156"/>
    </location>
</feature>
<feature type="compositionally biased region" description="Low complexity" evidence="6">
    <location>
        <begin position="175"/>
        <end position="190"/>
    </location>
</feature>
<feature type="compositionally biased region" description="Low complexity" evidence="6">
    <location>
        <begin position="199"/>
        <end position="212"/>
    </location>
</feature>
<feature type="compositionally biased region" description="Basic residues" evidence="6">
    <location>
        <begin position="213"/>
        <end position="226"/>
    </location>
</feature>
<feature type="compositionally biased region" description="Low complexity" evidence="6">
    <location>
        <begin position="565"/>
        <end position="581"/>
    </location>
</feature>
<feature type="compositionally biased region" description="Basic and acidic residues" evidence="6">
    <location>
        <begin position="582"/>
        <end position="595"/>
    </location>
</feature>
<feature type="compositionally biased region" description="Basic and acidic residues" evidence="6">
    <location>
        <begin position="604"/>
        <end position="622"/>
    </location>
</feature>
<feature type="compositionally biased region" description="Pro residues" evidence="6">
    <location>
        <begin position="653"/>
        <end position="682"/>
    </location>
</feature>
<feature type="modified residue" description="Omega-N-methylarginine" evidence="13">
    <location>
        <position position="27"/>
    </location>
</feature>
<feature type="modified residue" description="Phosphoserine" evidence="22 23">
    <location>
        <position position="48"/>
    </location>
</feature>
<feature type="modified residue" description="Phosphoserine" evidence="24">
    <location>
        <position position="125"/>
    </location>
</feature>
<feature type="modified residue" description="Phosphoserine" evidence="13 21 24">
    <location>
        <position position="192"/>
    </location>
</feature>
<feature type="modified residue" description="Omega-N-methylarginine" evidence="13">
    <location>
        <position position="212"/>
    </location>
</feature>
<feature type="modified residue" description="Asymmetric dimethylarginine; by PRMT1; alternate" evidence="15">
    <location>
        <position position="271"/>
    </location>
</feature>
<feature type="modified residue" description="Symmetric dimethylarginine; by PRMT7; alternate" evidence="15">
    <location>
        <position position="271"/>
    </location>
</feature>
<feature type="modified residue" description="Omega-N-methylarginine; alternate" evidence="13 15">
    <location>
        <position position="342"/>
    </location>
</feature>
<feature type="modified residue" description="Symmetric dimethylarginine; by PRMT7; alternate" evidence="13 15">
    <location>
        <position position="342"/>
    </location>
</feature>
<feature type="modified residue" description="Phosphothreonine" evidence="13">
    <location>
        <position position="346"/>
    </location>
</feature>
<feature type="modified residue" description="Symmetric dimethylarginine; by PRMT7" evidence="15">
    <location>
        <position position="614"/>
    </location>
</feature>
<feature type="modified residue" description="Phosphoserine" evidence="23">
    <location>
        <position position="697"/>
    </location>
</feature>
<feature type="modified residue" description="Dimethylated arginine; alternate" evidence="13">
    <location>
        <position position="698"/>
    </location>
</feature>
<feature type="modified residue" description="Omega-N-methylarginine; alternate" evidence="13">
    <location>
        <position position="698"/>
    </location>
</feature>
<feature type="modified residue" description="Phosphoserine" evidence="13">
    <location>
        <position position="700"/>
    </location>
</feature>
<feature type="splice variant" id="VSP_053371" description="In isoform 2." evidence="19">
    <original>SEPIRPIDPAAWVSHTAA</original>
    <variation>T</variation>
    <location>
        <begin position="350"/>
        <end position="367"/>
    </location>
</feature>
<feature type="sequence variant" id="VAR_036116" description="In a breast cancer sample; somatic mutation." evidence="10">
    <original>R</original>
    <variation>T</variation>
    <location>
        <position position="216"/>
    </location>
</feature>
<feature type="sequence variant" id="VAR_025519" description="In dbSNP:rs17853048." evidence="8">
    <original>W</original>
    <variation>L</variation>
    <location>
        <position position="433"/>
    </location>
</feature>
<feature type="mutagenesis site" description="Localizes to plasma membranes." evidence="15">
    <original>R</original>
    <variation>K</variation>
    <location>
        <position position="271"/>
    </location>
</feature>
<feature type="mutagenesis site" description="No effect on subcellular location." evidence="15">
    <original>R</original>
    <variation>K</variation>
    <location>
        <position position="342"/>
    </location>
</feature>
<feature type="mutagenesis site" description="Localizes to plasma membranes." evidence="15">
    <original>R</original>
    <variation>K</variation>
    <location>
        <position position="614"/>
    </location>
</feature>
<feature type="sequence conflict" description="In Ref. 1; AAB47447." evidence="20" ref="1">
    <original>G</original>
    <variation>D</variation>
    <location>
        <position position="2"/>
    </location>
</feature>
<feature type="sequence conflict" description="In Ref. 2; AAB84228." evidence="20" ref="2">
    <original>S</original>
    <variation>Y</variation>
    <location>
        <position position="76"/>
    </location>
</feature>
<feature type="sequence conflict" description="In Ref. 1; AAB47447." evidence="20" ref="1">
    <original>P</original>
    <variation>S</variation>
    <location>
        <position position="102"/>
    </location>
</feature>
<feature type="sequence conflict" description="In Ref. 1; AAB47447." evidence="20" ref="1">
    <original>G</original>
    <variation>W</variation>
    <location>
        <position position="151"/>
    </location>
</feature>
<feature type="sequence conflict" description="In Ref. 1; AAB47447." evidence="20" ref="1">
    <original>S</original>
    <variation>R</variation>
    <location>
        <position position="182"/>
    </location>
</feature>
<feature type="sequence conflict" description="In Ref. 1; AAB47447." evidence="20" ref="1">
    <original>K</original>
    <variation>N</variation>
    <location>
        <position position="218"/>
    </location>
</feature>
<feature type="sequence conflict" description="In Ref. 1; AAB47447." evidence="20" ref="1">
    <original>R</original>
    <variation>W</variation>
    <location>
        <position position="222"/>
    </location>
</feature>
<feature type="sequence conflict" description="In Ref. 1; AAB47447." evidence="20" ref="1">
    <original>E</original>
    <variation>D</variation>
    <location>
        <position position="230"/>
    </location>
</feature>
<feature type="sequence conflict" description="In Ref. 1; AAB47447." evidence="20" ref="1">
    <original>S</original>
    <variation>C</variation>
    <location>
        <position position="233"/>
    </location>
</feature>
<feature type="sequence conflict" description="In Ref. 1; AAB47447." evidence="20" ref="1">
    <original>S</original>
    <variation>T</variation>
    <location>
        <position position="236"/>
    </location>
</feature>
<feature type="sequence conflict" description="In Ref. 1; AAB47447." evidence="20" ref="1">
    <original>T</original>
    <variation>S</variation>
    <location>
        <position position="239"/>
    </location>
</feature>
<feature type="sequence conflict" description="In Ref. 1; AAB47447." evidence="20" ref="1">
    <original>T</original>
    <variation>A</variation>
    <location>
        <position position="242"/>
    </location>
</feature>
<feature type="sequence conflict" description="In Ref. 1; AAB47447." evidence="20" ref="1">
    <original>N</original>
    <variation>K</variation>
    <location>
        <position position="303"/>
    </location>
</feature>
<feature type="sequence conflict" description="In Ref. 1; AAB47447." evidence="20" ref="1">
    <original>R</original>
    <variation>C</variation>
    <location>
        <position position="431"/>
    </location>
</feature>
<feature type="sequence conflict" description="In Ref. 1; AAB47447." evidence="20" ref="1">
    <original>W</original>
    <variation>C</variation>
    <location>
        <position position="450"/>
    </location>
</feature>
<feature type="sequence conflict" description="In Ref. 1; AAB47447." evidence="20" ref="1">
    <original>R</original>
    <variation>P</variation>
    <location>
        <position position="465"/>
    </location>
</feature>
<feature type="sequence conflict" description="In Ref. 1; AAB47447." evidence="20" ref="1">
    <original>L</original>
    <variation>V</variation>
    <location>
        <position position="472"/>
    </location>
</feature>
<feature type="sequence conflict" description="In Ref. 3; AAB65244." evidence="20" ref="3">
    <original>P</original>
    <variation>R</variation>
    <location>
        <position position="543"/>
    </location>
</feature>
<feature type="sequence conflict" description="In Ref. 3; AAB65244." evidence="20" ref="3">
    <original>FP</original>
    <variation>LG</variation>
    <location>
        <begin position="553"/>
        <end position="554"/>
    </location>
</feature>
<feature type="sequence conflict" description="In Ref. 1; AAB47447." evidence="20" ref="1">
    <original>A</original>
    <variation>T</variation>
    <location>
        <position position="629"/>
    </location>
</feature>
<feature type="sequence conflict" description="In Ref. 1; AAB47447." evidence="20" ref="1">
    <original>S</original>
    <variation>I</variation>
    <location>
        <position position="633"/>
    </location>
</feature>
<feature type="sequence conflict" description="In Ref. 4; BAA13199." evidence="20" ref="4">
    <original>PPGRDLASVPPELTASRQSFRMAMGNPSEFFVDVM</original>
    <variation>LRAATWPQCPRN</variation>
    <location>
        <begin position="682"/>
        <end position="716"/>
    </location>
</feature>
<feature type="strand" evidence="25">
    <location>
        <begin position="247"/>
        <end position="252"/>
    </location>
</feature>
<feature type="turn" evidence="28">
    <location>
        <begin position="254"/>
        <end position="256"/>
    </location>
</feature>
<feature type="strand" evidence="25">
    <location>
        <begin position="262"/>
        <end position="266"/>
    </location>
</feature>
<feature type="strand" evidence="26">
    <location>
        <begin position="270"/>
        <end position="272"/>
    </location>
</feature>
<feature type="strand" evidence="25">
    <location>
        <begin position="276"/>
        <end position="281"/>
    </location>
</feature>
<feature type="helix" evidence="25">
    <location>
        <begin position="286"/>
        <end position="290"/>
    </location>
</feature>
<feature type="strand" evidence="25">
    <location>
        <begin position="298"/>
        <end position="302"/>
    </location>
</feature>
<feature type="helix" evidence="25">
    <location>
        <begin position="312"/>
        <end position="324"/>
    </location>
</feature>
<feature type="strand" evidence="27">
    <location>
        <begin position="325"/>
        <end position="327"/>
    </location>
</feature>
<feature type="strand" evidence="25">
    <location>
        <begin position="329"/>
        <end position="334"/>
    </location>
</feature>
<gene>
    <name type="primary">DVL3</name>
    <name type="synonym">KIAA0208</name>
</gene>
<keyword id="KW-0002">3D-structure</keyword>
<keyword id="KW-0025">Alternative splicing</keyword>
<keyword id="KW-0963">Cytoplasm</keyword>
<keyword id="KW-0217">Developmental protein</keyword>
<keyword id="KW-0242">Dwarfism</keyword>
<keyword id="KW-0488">Methylation</keyword>
<keyword id="KW-0597">Phosphoprotein</keyword>
<keyword id="KW-1267">Proteomics identification</keyword>
<keyword id="KW-1185">Reference proteome</keyword>
<keyword id="KW-0832">Ubl conjugation</keyword>
<keyword id="KW-0879">Wnt signaling pathway</keyword>